<comment type="function">
    <text evidence="1 13 14 17">Plays a role in the structural integrity of cartilage via its interaction with other extracellular matrix proteins such as the collagens and fibronectin. Can mediate the interaction of chondrocytes with the cartilage extracellular matrix through interaction with cell surface integrin receptors (PubMed:16051604, PubMed:16542502). Could play a role in the pathogenesis of osteoarthritis (PubMed:16542502). Potent suppressor of apoptosis in both primary chondrocytes and transformed cells. Suppresses apoptosis by blocking the activation of caspase-3 and by inducing the IAP family of survival proteins (BIRC3, BIRC2, BIRC5 and XIAP) (PubMed:17993464). Essential for maintaining a vascular smooth muscle cells (VSMCs) contractile/differentiated phenotype under physiological and pathological stimuli. Maintains this phenotype of VSMCs by interacting with ITGA7 (By similarity).</text>
</comment>
<comment type="cofactor">
    <cofactor evidence="6 7 18">
        <name>Ca(2+)</name>
        <dbReference type="ChEBI" id="CHEBI:29108"/>
    </cofactor>
    <text evidence="18">Binds 11-14 calcium ions per subunit.</text>
</comment>
<comment type="subunit">
    <text evidence="1 7 11 12 13 15 16 18 20">Pentamer; disulfide-linked (PubMed:32686688). Exists in a more compact conformation in the presence of calcium and shows a more extended conformation in the absence of calcium (PubMed:19276170). Interacts with ITGB3, ITGA5 and FN1. Binding to FN1 requires the presence of divalent cations (Ca(2+), Mg(2+) or Mn(2+)). The greatest amount of binding is seen in the presence of Mn(2+) (PubMed:12225811, PubMed:16051604). Interacts with MATN1, MATN3, MATN4 and ACAN (PubMed:15075323, PubMed:17588949). Binds heparin, heparan sulfate and chondroitin sulfate. EDTA dimishes significantly its binding to ACAN and abolishes its binding to MATN3, MATN4 and chondroitin sulfate (PubMed:17588949). Interacts with collagen I, II and IX, and interaction with these collagens is dependent on the presence of zinc ions (PubMed:11084047). Interacts with ADAMTS12 (PubMed:16611630). Interacts with ITGA7 (By similarity).</text>
</comment>
<comment type="interaction">
    <interactant intactId="EBI-2531022">
        <id>P49747</id>
    </interactant>
    <interactant intactId="EBI-9028051">
        <id>P58397</id>
        <label>ADAMTS12</label>
    </interactant>
    <organismsDiffer>false</organismsDiffer>
    <experiments>3</experiments>
</comment>
<comment type="interaction">
    <interactant intactId="EBI-2531022">
        <id>P49747</id>
    </interactant>
    <interactant intactId="EBI-745213">
        <id>P29972</id>
        <label>AQP1</label>
    </interactant>
    <organismsDiffer>false</organismsDiffer>
    <experiments>3</experiments>
</comment>
<comment type="interaction">
    <interactant intactId="EBI-2531022">
        <id>P49747</id>
    </interactant>
    <interactant intactId="EBI-10179267">
        <id>O00244</id>
        <label>ATOX1</label>
    </interactant>
    <organismsDiffer>false</organismsDiffer>
    <experiments>3</experiments>
</comment>
<comment type="interaction">
    <interactant intactId="EBI-2531022">
        <id>P49747</id>
    </interactant>
    <interactant intactId="EBI-3867333">
        <id>A8MQ03</id>
        <label>CYSRT1</label>
    </interactant>
    <organismsDiffer>false</organismsDiffer>
    <experiments>3</experiments>
</comment>
<comment type="interaction">
    <interactant intactId="EBI-2531022">
        <id>P49747</id>
    </interactant>
    <interactant intactId="EBI-16439278">
        <id>Q6FHY5</id>
        <label>MEOX2</label>
    </interactant>
    <organismsDiffer>false</organismsDiffer>
    <experiments>3</experiments>
</comment>
<comment type="interaction">
    <interactant intactId="EBI-2531022">
        <id>P49747</id>
    </interactant>
    <interactant intactId="EBI-1210753">
        <id>Q7Z417</id>
        <label>NUFIP2</label>
    </interactant>
    <organismsDiffer>false</organismsDiffer>
    <experiments>3</experiments>
</comment>
<comment type="interaction">
    <interactant intactId="EBI-2531022">
        <id>P49747</id>
    </interactant>
    <interactant intactId="EBI-740446">
        <id>P32242</id>
        <label>OTX1</label>
    </interactant>
    <organismsDiffer>false</organismsDiffer>
    <experiments>7</experiments>
</comment>
<comment type="interaction">
    <interactant intactId="EBI-2531022">
        <id>P49747</id>
    </interactant>
    <interactant intactId="EBI-744081">
        <id>Q96EQ0</id>
        <label>SGTB</label>
    </interactant>
    <organismsDiffer>false</organismsDiffer>
    <experiments>3</experiments>
</comment>
<comment type="interaction">
    <interactant intactId="EBI-2531022">
        <id>P49747</id>
    </interactant>
    <interactant intactId="EBI-6259246">
        <id>P13608</id>
        <label>ACAN</label>
    </interactant>
    <organismsDiffer>true</organismsDiffer>
    <experiments>2</experiments>
</comment>
<comment type="subcellular location">
    <subcellularLocation>
        <location evidence="20">Secreted</location>
        <location evidence="20">Extracellular space</location>
        <location evidence="20">Extracellular matrix</location>
    </subcellularLocation>
</comment>
<comment type="alternative products">
    <event type="alternative splicing"/>
    <isoform>
        <id>P49747-1</id>
        <name>1</name>
        <sequence type="displayed"/>
    </isoform>
    <isoform>
        <id>P49747-2</id>
        <name>2</name>
        <sequence type="described" ref="VSP_055758"/>
    </isoform>
</comment>
<comment type="tissue specificity">
    <text evidence="14 20">Abundantly expressed in the chondrocyte extracellular matrix, and is also found in bone, tendon, ligament and synovium and blood vessels. Increased amounts are produced during late stages of osteoarthritis in the area adjacent to the main defect.</text>
</comment>
<comment type="developmental stage">
    <text evidence="14">Present during the earliest stages of limb maturation and is later found in regions where the joints develop.</text>
</comment>
<comment type="domain">
    <text evidence="17">The cell attachment motif mediates the attachment to chondrocytes. It mediates the induction of both the IAP family of survival proteins and the antiapoptotic response.</text>
</comment>
<comment type="domain">
    <text evidence="17">The TSP C-terminal domain mediates interaction with FN1 and ACAN.</text>
</comment>
<comment type="domain">
    <text evidence="17">Each of the eight TSP type-3 repeats binds two calcium ions. The TSP C-terminal domain binds three calcium ions.</text>
</comment>
<comment type="PTM">
    <text evidence="21">Proteolytically cleaved by metalloproteases ADAMTS4 and ADAMTS1 with ADAMTS4 showing more potent activity.</text>
</comment>
<comment type="disease" evidence="7 8 19 23 25 26 27 29 30">
    <disease id="DI-00785">
        <name>Multiple epiphyseal dysplasia 1</name>
        <acronym>EDM1</acronym>
        <description>A generalized skeletal dysplasia associated with significant morbidity. Joint pain, joint deformity, waddling gait, and short stature are the main clinical signs and symptoms. Radiological examination of the skeleton shows delayed, irregular mineralization of the epiphyseal ossification centers and of the centers of the carpal and tarsal bones. Multiple epiphyseal dysplasia is broadly categorized into the more severe Fairbank and the milder Ribbing types. The Fairbank type is characterized by shortness of stature, short and stubby fingers, small epiphyses in several joints, including the knee, ankle, hand, and hip. The Ribbing type is confined predominantly to the hip joints and is characterized by hands that are normal and stature that is normal or near-normal.</description>
        <dbReference type="MIM" id="132400"/>
    </disease>
    <text>The disease is caused by variants affecting the gene represented in this entry.</text>
</comment>
<comment type="disease" evidence="6 7 9 10 19 22 23 26 27 28 29 30">
    <disease id="DI-02227">
        <name>Pseudoachondroplasia</name>
        <acronym>PSACH</acronym>
        <description>A skeletal dysplasia usually manifesting in the second year of life and characterized by moderate to severe disproportionate short stature, deformity of the lower limbs, brachydactyly, ligamentous laxity, and degenerative joint disease.</description>
        <dbReference type="MIM" id="177170"/>
    </disease>
    <text>The disease is caused by variants affecting the gene represented in this entry.</text>
</comment>
<comment type="disease" evidence="20">
    <disease id="DI-06003">
        <name>Carpal tunnel syndrome 2</name>
        <acronym>CTS2</acronym>
        <description>An autosomal dominant form of carpal tunnel syndrome, a condition characterized by entrapment of the median nerve within the carpal tunnel. Symptoms include burning pain and paresthesias involving the ventral surface of the hand and fingers which may radiate proximally. Impairment of sensation in the distribution of the median nerve and thenar muscle atrophy may occur. This condition may be associated with repetitive occupational trauma, wrist injuries, amyloid neuropathies, rheumatoid arthritis.</description>
        <dbReference type="MIM" id="619161"/>
    </disease>
    <text>The disease is caused by variants affecting the gene represented in this entry.</text>
</comment>
<comment type="similarity">
    <text evidence="33">Belongs to the thrombospondin family.</text>
</comment>
<comment type="sequence caution" evidence="33">
    <conflict type="erroneous gene model prediction">
        <sequence resource="EMBL-CDS" id="AAB86501"/>
    </conflict>
</comment>
<sequence length="757" mass="82860">MVPDTACVLLLTLAALGASGQGQSPLGSDLGPQMLRELQETNAALQDVRELLRQQVREITFLKNTVMECDACGMQQSVRTGLPSVRPLLHCAPGFCFPGVACIQTESGARCGPCPAGFTGNGSHCTDVNECNAHPCFPRVRCINTSPGFRCEACPPGYSGPTHQGVGLAFAKANKQVCTDINECETGQHNCVPNSVCINTRGSFQCGPCQPGFVGDQASGCQRRAQRFCPDGSPSECHEHADCVLERDGSRSCVCAVGWAGNGILCGRDTDLDGFPDEKLRCPERQCRKDNCVTVPNSGQEDVDRDGIGDACDPDADGDGVPNEKDNCPLVRNPDQRNTDEDKWGDACDNCRSQKNDDQKDTDQDGRGDACDDDIDGDRIRNQADNCPRVPNSDQKDSDGDGIGDACDNCPQKSNPDQADVDHDFVGDACDSDQDQDGDGHQDSRDNCPTVPNSAQEDSDHDGQGDACDDDDDNDGVPDSRDNCRLVPNPGQEDADRDGVGDVCQDDFDADKVVDKIDVCPENAEVTLTDFRAFQTVVLDPEGDAQIDPNWVVLNQGREIVQTMNSDPGLAVGYTAFNGVDFEGTFHVNTVTDDDYAGFIFGYQDSSSFYVVMWKQMEQTYWQANPFRAVAEPGIQLKAVKSSTGPGEQLRNALWHTGDTESQVRLLWKDPRNVGWKDKKSYRWFLQHRPQVGYIRVRFYEGPELVADSNVVLDTTMRGGRLGVFCFSQENIIWANLRYRCNDTIPEDYETHQLRQA</sequence>
<gene>
    <name evidence="35" type="primary">COMP</name>
</gene>
<feature type="signal peptide" evidence="2">
    <location>
        <begin position="1"/>
        <end position="20"/>
    </location>
</feature>
<feature type="chain" id="PRO_0000035857" description="Cartilage oligomeric matrix protein">
    <location>
        <begin position="21"/>
        <end position="757"/>
    </location>
</feature>
<feature type="domain" description="EGF-like 1" evidence="3">
    <location>
        <begin position="87"/>
        <end position="126"/>
    </location>
</feature>
<feature type="domain" description="EGF-like 2; calcium-binding" evidence="3">
    <location>
        <begin position="127"/>
        <end position="179"/>
    </location>
</feature>
<feature type="domain" description="EGF-like 3; calcium-binding" evidence="3">
    <location>
        <begin position="180"/>
        <end position="222"/>
    </location>
</feature>
<feature type="domain" description="EGF-like 4" evidence="3">
    <location>
        <begin position="225"/>
        <end position="267"/>
    </location>
</feature>
<feature type="repeat" description="TSP type-3 1">
    <location>
        <begin position="268"/>
        <end position="300"/>
    </location>
</feature>
<feature type="repeat" description="TSP type-3 2">
    <location>
        <begin position="301"/>
        <end position="336"/>
    </location>
</feature>
<feature type="repeat" description="TSP type-3 3">
    <location>
        <begin position="337"/>
        <end position="359"/>
    </location>
</feature>
<feature type="repeat" description="TSP type-3 4">
    <location>
        <begin position="360"/>
        <end position="395"/>
    </location>
</feature>
<feature type="repeat" description="TSP type-3 5">
    <location>
        <begin position="396"/>
        <end position="418"/>
    </location>
</feature>
<feature type="repeat" description="TSP type-3 6">
    <location>
        <begin position="419"/>
        <end position="456"/>
    </location>
</feature>
<feature type="repeat" description="TSP type-3 7">
    <location>
        <begin position="457"/>
        <end position="492"/>
    </location>
</feature>
<feature type="repeat" description="TSP type-3 8">
    <location>
        <begin position="493"/>
        <end position="528"/>
    </location>
</feature>
<feature type="domain" description="TSP C-terminal" evidence="4">
    <location>
        <begin position="532"/>
        <end position="746"/>
    </location>
</feature>
<feature type="region of interest" description="COMP N-terminal">
    <location>
        <begin position="22"/>
        <end position="86"/>
    </location>
</feature>
<feature type="region of interest" description="Disordered" evidence="5">
    <location>
        <begin position="298"/>
        <end position="503"/>
    </location>
</feature>
<feature type="region of interest" description="Mediates cell survival and induction of the IAP family of survival proteins">
    <location>
        <begin position="527"/>
        <end position="757"/>
    </location>
</feature>
<feature type="short sequence motif" description="Cell attachment site" evidence="2">
    <location>
        <begin position="367"/>
        <end position="369"/>
    </location>
</feature>
<feature type="compositionally biased region" description="Basic and acidic residues" evidence="5">
    <location>
        <begin position="334"/>
        <end position="346"/>
    </location>
</feature>
<feature type="compositionally biased region" description="Basic and acidic residues" evidence="5">
    <location>
        <begin position="352"/>
        <end position="370"/>
    </location>
</feature>
<feature type="compositionally biased region" description="Acidic residues" evidence="5">
    <location>
        <begin position="467"/>
        <end position="476"/>
    </location>
</feature>
<feature type="site" description="Cleavage; by ADAMTS4">
    <location>
        <begin position="77"/>
        <end position="78"/>
    </location>
</feature>
<feature type="glycosylation site" description="N-linked (GlcNAc...) asparagine" evidence="2">
    <location>
        <position position="121"/>
    </location>
</feature>
<feature type="glycosylation site" description="N-linked (GlcNAc...) asparagine" evidence="18">
    <location>
        <position position="742"/>
    </location>
</feature>
<feature type="disulfide bond" description="Interchain" evidence="34">
    <location>
        <position position="69"/>
    </location>
</feature>
<feature type="disulfide bond" description="Interchain" evidence="34">
    <location>
        <position position="72"/>
    </location>
</feature>
<feature type="disulfide bond" evidence="3">
    <location>
        <begin position="91"/>
        <end position="102"/>
    </location>
</feature>
<feature type="disulfide bond" evidence="3">
    <location>
        <begin position="96"/>
        <end position="111"/>
    </location>
</feature>
<feature type="disulfide bond" evidence="3">
    <location>
        <begin position="114"/>
        <end position="125"/>
    </location>
</feature>
<feature type="disulfide bond" evidence="3">
    <location>
        <begin position="131"/>
        <end position="142"/>
    </location>
</feature>
<feature type="disulfide bond" evidence="3">
    <location>
        <begin position="136"/>
        <end position="151"/>
    </location>
</feature>
<feature type="disulfide bond" evidence="3">
    <location>
        <begin position="154"/>
        <end position="178"/>
    </location>
</feature>
<feature type="disulfide bond" evidence="3">
    <location>
        <begin position="184"/>
        <end position="197"/>
    </location>
</feature>
<feature type="disulfide bond" evidence="3">
    <location>
        <begin position="191"/>
        <end position="206"/>
    </location>
</feature>
<feature type="disulfide bond" evidence="3">
    <location>
        <begin position="209"/>
        <end position="221"/>
    </location>
</feature>
<feature type="disulfide bond" evidence="3 18">
    <location>
        <begin position="229"/>
        <end position="243"/>
    </location>
</feature>
<feature type="disulfide bond" evidence="3 18">
    <location>
        <begin position="237"/>
        <end position="253"/>
    </location>
</feature>
<feature type="disulfide bond" evidence="3 18">
    <location>
        <begin position="255"/>
        <end position="266"/>
    </location>
</feature>
<feature type="disulfide bond" evidence="3 18">
    <location>
        <begin position="282"/>
        <end position="287"/>
    </location>
</feature>
<feature type="disulfide bond" evidence="3 18">
    <location>
        <begin position="292"/>
        <end position="312"/>
    </location>
</feature>
<feature type="disulfide bond" evidence="3 18">
    <location>
        <begin position="328"/>
        <end position="348"/>
    </location>
</feature>
<feature type="disulfide bond" evidence="3 18">
    <location>
        <begin position="351"/>
        <end position="371"/>
    </location>
</feature>
<feature type="disulfide bond" evidence="3 18">
    <location>
        <begin position="387"/>
        <end position="407"/>
    </location>
</feature>
<feature type="disulfide bond" evidence="3 18">
    <location>
        <begin position="410"/>
        <end position="430"/>
    </location>
</feature>
<feature type="disulfide bond" evidence="3 18">
    <location>
        <begin position="448"/>
        <end position="468"/>
    </location>
</feature>
<feature type="disulfide bond" evidence="3 18">
    <location>
        <begin position="484"/>
        <end position="504"/>
    </location>
</feature>
<feature type="disulfide bond" evidence="3 18">
    <location>
        <begin position="520"/>
        <end position="741"/>
    </location>
</feature>
<feature type="splice variant" id="VSP_055758" description="In isoform 2." evidence="32">
    <location>
        <begin position="129"/>
        <end position="181"/>
    </location>
</feature>
<feature type="sequence variant" id="VAR_016254" evidence="24 31">
    <original>E</original>
    <variation>D</variation>
    <location>
        <position position="50"/>
    </location>
</feature>
<feature type="sequence variant" id="VAR_016255" evidence="24 31">
    <original>L</original>
    <variation>W</variation>
    <location>
        <position position="51"/>
    </location>
</feature>
<feature type="sequence variant" id="VAR_085230" description="In CTS2; reduced secretion in tendon cells; no effect on secretion in chondrocytes; disrupted pentamerization; induced ER stress; dbSNP:rs2055205599." evidence="20">
    <original>V</original>
    <variation>E</variation>
    <location>
        <position position="66"/>
    </location>
</feature>
<feature type="sequence variant" id="VAR_016257" evidence="24 31">
    <original>A</original>
    <variation>G</variation>
    <location>
        <position position="109"/>
    </location>
</feature>
<feature type="sequence variant" id="VAR_066789" description="In EDM1; dbSNP:rs763887855." evidence="19">
    <original>G</original>
    <variation>E</variation>
    <location>
        <position position="167"/>
    </location>
</feature>
<feature type="sequence variant" id="VAR_016258" evidence="24 31">
    <original>R</original>
    <variation>G</variation>
    <location>
        <position position="224"/>
    </location>
</feature>
<feature type="sequence variant" id="VAR_066790" description="In PSACH; dbSNP:rs557483957." evidence="19">
    <original>P</original>
    <variation>S</variation>
    <location>
        <position position="234"/>
    </location>
</feature>
<feature type="sequence variant" id="VAR_026239" description="In EDM1; dbSNP:rs1311845746." evidence="8 19">
    <original>P</original>
    <variation>R</variation>
    <location>
        <position position="276"/>
    </location>
</feature>
<feature type="sequence variant" id="VAR_016261" evidence="24 31">
    <original>R</original>
    <variation>P</variation>
    <location>
        <position position="285"/>
    </location>
</feature>
<feature type="sequence variant" id="VAR_066791" description="In PSACH; dbSNP:rs1568556118." evidence="19">
    <original>D</original>
    <variation>G</variation>
    <location>
        <position position="290"/>
    </location>
</feature>
<feature type="sequence variant" id="VAR_007614" description="In PSACH; mild form." evidence="30">
    <original>D</original>
    <variation>N</variation>
    <location>
        <position position="290"/>
    </location>
</feature>
<feature type="sequence variant" id="VAR_066792" description="In EDM1; phenotypic features overlapping with mild PSACH." evidence="19">
    <original>S</original>
    <variation>L</variation>
    <location>
        <position position="298"/>
    </location>
</feature>
<feature type="sequence variant" id="VAR_007615" description="In PSACH; dbSNP:rs2145903238." evidence="19">
    <original>G</original>
    <variation>R</variation>
    <location>
        <position position="299"/>
    </location>
</feature>
<feature type="sequence variant" id="VAR_066793" description="In EDM1." evidence="19">
    <original>A</original>
    <variation>D</variation>
    <location>
        <position position="311"/>
    </location>
</feature>
<feature type="sequence variant" id="VAR_066794" description="In EDM1; atypical form." evidence="19">
    <original>D</original>
    <variation>G</variation>
    <location>
        <position position="317"/>
    </location>
</feature>
<feature type="sequence variant" id="VAR_066795" description="In EDM1." evidence="19">
    <original>D</original>
    <variation>G</variation>
    <location>
        <position position="326"/>
    </location>
</feature>
<feature type="sequence variant" id="VAR_066796" description="In PSACH." evidence="19">
    <original>D</original>
    <variation>Y</variation>
    <location>
        <position position="326"/>
    </location>
</feature>
<feature type="sequence variant" id="VAR_007616" description="In PSACH; mild form; dbSNP:rs137852653." evidence="23 27">
    <original>C</original>
    <variation>R</variation>
    <location>
        <position position="328"/>
    </location>
</feature>
<feature type="sequence variant" id="VAR_066797" description="In PSACH." evidence="19">
    <location>
        <begin position="341"/>
        <end position="342"/>
    </location>
</feature>
<feature type="sequence variant" id="VAR_007617" description="In EDM1; Fairbank type; dbSNP:rs137852652." evidence="23 27">
    <original>D</original>
    <variation>Y</variation>
    <location>
        <position position="342"/>
    </location>
</feature>
<feature type="sequence variant" id="VAR_066798" description="In EDM1." evidence="19">
    <original>C</original>
    <variation>F</variation>
    <location>
        <position position="348"/>
    </location>
</feature>
<feature type="sequence variant" id="VAR_017102" description="In PSACH; dbSNP:rs137852656." evidence="10">
    <original>C</original>
    <variation>R</variation>
    <location>
        <position position="348"/>
    </location>
</feature>
<feature type="sequence variant" id="VAR_007618" description="In PSACH; mild form." evidence="30">
    <original>D</original>
    <variation>V</variation>
    <location>
        <position position="349"/>
    </location>
</feature>
<feature type="sequence variant" id="VAR_066799" description="In PSACH." evidence="19">
    <location>
        <begin position="350"/>
        <end position="372"/>
    </location>
</feature>
<feature type="sequence variant" id="VAR_007619" description="In EDM1; Fairbank type." evidence="30">
    <original>D</original>
    <variation>V</variation>
    <location>
        <position position="361"/>
    </location>
</feature>
<feature type="sequence variant" id="VAR_007620" description="In EDM1; binds less calcium." evidence="7 27">
    <original>D</original>
    <variation>Y</variation>
    <location>
        <position position="361"/>
    </location>
</feature>
<feature type="sequence variant" id="VAR_007621" description="In EDM1." evidence="27">
    <location>
        <begin position="367"/>
        <end position="368"/>
    </location>
</feature>
<feature type="sequence variant" id="VAR_007622" description="In EDM1; Fairbank type." evidence="19 26">
    <original>C</original>
    <variation>S</variation>
    <location>
        <position position="371"/>
    </location>
</feature>
<feature type="sequence variant" id="VAR_066800" description="In EDM1; dbSNP:rs1057521130." evidence="19">
    <original>C</original>
    <variation>Y</variation>
    <location>
        <position position="371"/>
    </location>
</feature>
<feature type="sequence variant" id="VAR_007623" description="In PSACH." evidence="27">
    <location>
        <position position="372"/>
    </location>
</feature>
<feature type="sequence variant" id="VAR_066801" description="In EDM1." evidence="19">
    <original>D</original>
    <variation>N</variation>
    <location>
        <position position="374"/>
    </location>
</feature>
<feature type="sequence variant" id="VAR_007624" description="In PSACH; mild form.">
    <location>
        <position position="374"/>
    </location>
</feature>
<feature type="sequence variant" id="VAR_066802" description="In EDM1; dbSNP:rs1555791556." evidence="19">
    <original>D</original>
    <variation>N</variation>
    <location>
        <position position="376"/>
    </location>
</feature>
<feature type="sequence variant" id="VAR_066803" description="In PSACH." evidence="19">
    <original>D</original>
    <variation>V</variation>
    <location>
        <position position="378"/>
    </location>
</feature>
<feature type="sequence variant" id="VAR_046796" description="In dbSNP:rs3179763.">
    <original>R</original>
    <variation>C</variation>
    <location>
        <position position="381"/>
    </location>
</feature>
<feature type="sequence variant" id="VAR_066804" description="In EDM1; atypical form; dbSNP:rs1601054715." evidence="19">
    <original>D</original>
    <variation>N</variation>
    <location>
        <position position="385"/>
    </location>
</feature>
<feature type="sequence variant" id="VAR_066805" description="In EDM1; atypical form; dbSNP:rs1601054715." evidence="19">
    <original>D</original>
    <variation>Y</variation>
    <location>
        <position position="385"/>
    </location>
</feature>
<feature type="sequence variant" id="VAR_066806" description="In EDM1; dbSNP:rs2145901379." evidence="19">
    <location>
        <position position="385"/>
    </location>
</feature>
<feature type="sequence variant" id="VAR_007625" description="In PSACH; mild form." evidence="30">
    <original>C</original>
    <variation>G</variation>
    <location>
        <position position="387"/>
    </location>
</feature>
<feature type="sequence variant" id="VAR_066807" description="In PSACH." evidence="19">
    <original>C</original>
    <variation>R</variation>
    <location>
        <position position="387"/>
    </location>
</feature>
<feature type="sequence variant" id="VAR_007626" description="In PSACH." evidence="27">
    <original>PNSD</original>
    <variation>V</variation>
    <location>
        <begin position="391"/>
        <end position="394"/>
    </location>
</feature>
<feature type="sequence variant" id="VAR_066808" description="In EDM1; dbSNP:rs1479804676." evidence="19">
    <original>D</original>
    <variation>H</variation>
    <location>
        <position position="397"/>
    </location>
</feature>
<feature type="sequence variant" id="VAR_066809" description="In PSACH." evidence="19">
    <original>GIG</original>
    <variation>VC</variation>
    <location>
        <begin position="402"/>
        <end position="404"/>
    </location>
</feature>
<feature type="sequence variant" id="VAR_066810" description="In EDM1; dbSNP:rs2055168912." evidence="19">
    <original>G</original>
    <variation>R</variation>
    <location>
        <position position="404"/>
    </location>
</feature>
<feature type="sequence variant" id="VAR_007627" description="In EDM1." evidence="27">
    <original>D</original>
    <variation>Y</variation>
    <location>
        <position position="408"/>
    </location>
</feature>
<feature type="sequence variant" id="VAR_066811" description="In EDM1; phenotype overlapping with mild PSACH; dbSNP:rs2145901300." evidence="19">
    <original>C</original>
    <variation>Y</variation>
    <location>
        <position position="410"/>
    </location>
</feature>
<feature type="sequence variant" id="VAR_066812" description="In EDM1." evidence="19">
    <original>N</original>
    <variation>K</variation>
    <location>
        <position position="415"/>
    </location>
</feature>
<feature type="sequence variant" id="VAR_026240" description="In EDM1." evidence="8">
    <original>D</original>
    <variation>A</variation>
    <location>
        <position position="420"/>
    </location>
</feature>
<feature type="sequence variant" id="VAR_066813" description="In EDM1; dbSNP:rs2145901034." evidence="19">
    <original>G</original>
    <variation>E</variation>
    <location>
        <position position="427"/>
    </location>
</feature>
<feature type="sequence variant" id="VAR_066814" description="In EDM1." evidence="19">
    <original>CDS</original>
    <variation>LWC</variation>
    <location>
        <begin position="430"/>
        <end position="432"/>
    </location>
</feature>
<feature type="sequence variant" id="VAR_007628" description="In PSACH; mild form; dbSNP:rs2145900919." evidence="29">
    <original>G</original>
    <variation>E</variation>
    <location>
        <position position="440"/>
    </location>
</feature>
<feature type="sequence variant" id="VAR_007629" description="In PSACH; dbSNP:rs1601053997." evidence="19 27">
    <original>G</original>
    <variation>R</variation>
    <location>
        <position position="440"/>
    </location>
</feature>
<feature type="sequence variant" id="VAR_066815" description="In PSACH." evidence="19">
    <original>D</original>
    <variation>N</variation>
    <location>
        <position position="446"/>
    </location>
</feature>
<feature type="sequence variant" id="VAR_066816" description="In PSACH." evidence="19">
    <original>C</original>
    <variation>S</variation>
    <location>
        <position position="448"/>
    </location>
</feature>
<feature type="sequence variant" id="VAR_007630" description="In EDM1; Fairbank type; dbSNP:rs28936668." evidence="29">
    <original>N</original>
    <variation>S</variation>
    <location>
        <position position="453"/>
    </location>
</feature>
<feature type="sequence variant" id="VAR_066817" description="In EDM1." evidence="19">
    <location>
        <position position="457"/>
    </location>
</feature>
<feature type="sequence variant" id="VAR_007631" description="In PSACH; severe form; dbSNP:rs2145900868." evidence="22 27">
    <location>
        <position position="459"/>
    </location>
</feature>
<feature type="sequence variant" id="VAR_007632" description="In PSACH; severe form; dbSNP:rs137852651." evidence="22 27">
    <original>C</original>
    <variation>Y</variation>
    <location>
        <position position="468"/>
    </location>
</feature>
<feature type="sequence variant" id="VAR_007633" description="In PSACH; severe form; MUT3 mutant; most common mutation; binds less calcium and causes misfolding of the protein; greatly reduced interaction with ACAN; reduced interaction with collagen." evidence="6 7 27">
    <location>
        <position position="469"/>
    </location>
</feature>
<feature type="sequence variant" id="VAR_007634" description="In PSACH; severe form; dbSNP:rs137852650." evidence="22 27">
    <original>D</original>
    <variation>Y</variation>
    <location>
        <position position="472"/>
    </location>
</feature>
<feature type="sequence variant" id="VAR_066818" description="In EDM1." evidence="19">
    <original>D</original>
    <variation>DD</variation>
    <location>
        <position position="473"/>
    </location>
</feature>
<feature type="sequence variant" id="VAR_007635" description="In PSACH; severe form; dbSNP:rs28936669." evidence="30">
    <original>D</original>
    <variation>G</variation>
    <location>
        <position position="473"/>
    </location>
</feature>
<feature type="sequence variant" id="VAR_066819" description="In PSACH." evidence="19">
    <original>D</original>
    <variation>H</variation>
    <location>
        <position position="473"/>
    </location>
</feature>
<feature type="sequence variant" id="VAR_007636" description="In PSACH; severe form; dbSNP:rs193922900." evidence="19">
    <location>
        <position position="473"/>
    </location>
</feature>
<feature type="sequence variant" id="VAR_066820" description="In PSACH." evidence="19">
    <original>D</original>
    <variation>N</variation>
    <location>
        <position position="475"/>
    </location>
</feature>
<feature type="sequence variant" id="VAR_007637" description="In PSACH." evidence="19 28">
    <original>D</original>
    <variation>G</variation>
    <location>
        <position position="482"/>
    </location>
</feature>
<feature type="sequence variant" id="VAR_066821" description="In EDM1; dbSNP:rs1555791425." evidence="19">
    <original>G</original>
    <variation>D</variation>
    <location>
        <position position="501"/>
    </location>
</feature>
<feature type="sequence variant" id="VAR_066822" description="In PSACH; dbSNP:rs2145900497." evidence="19">
    <original>D</original>
    <variation>G</variation>
    <location>
        <position position="507"/>
    </location>
</feature>
<feature type="sequence variant" id="VAR_066823" description="In PSACH." evidence="19">
    <original>D</original>
    <variation>G</variation>
    <location>
        <position position="511"/>
    </location>
</feature>
<feature type="sequence variant" id="VAR_007638" description="In PSACH; mild form." evidence="26">
    <location>
        <begin position="513"/>
        <end position="516"/>
    </location>
</feature>
<feature type="sequence variant" id="VAR_066824" description="In PSACH." evidence="19">
    <original>D</original>
    <variation>G</variation>
    <location>
        <position position="515"/>
    </location>
</feature>
<feature type="sequence variant" id="VAR_007639" description="In PSACH; mild form; dbSNP:rs1359984033." evidence="30">
    <original>D</original>
    <variation>N</variation>
    <location>
        <position position="518"/>
    </location>
</feature>
<feature type="sequence variant" id="VAR_007640" description="In EDM1; Ribbing type; dbSNP:rs137852654." evidence="19 25">
    <original>N</original>
    <variation>K</variation>
    <location>
        <position position="523"/>
    </location>
</feature>
<feature type="sequence variant" id="VAR_066825" description="In PSACH; dbSNP:rs312262903." evidence="19">
    <original>T</original>
    <variation>I</variation>
    <location>
        <position position="529"/>
    </location>
</feature>
<feature type="sequence variant" id="VAR_007641" description="In PSACH; mild form and EDM1; dbSNP:rs312262900." evidence="8 19">
    <original>T</original>
    <variation>M</variation>
    <location>
        <position position="585"/>
    </location>
</feature>
<feature type="sequence variant" id="VAR_007642" description="In EDM1 and PSACH; dbSNP:rs312262900." evidence="19 29">
    <original>T</original>
    <variation>R</variation>
    <location>
        <position position="585"/>
    </location>
</feature>
<feature type="sequence variant" id="VAR_066826" description="In EDM1; dbSNP:rs149551600." evidence="19">
    <original>R</original>
    <variation>P</variation>
    <location>
        <position position="718"/>
    </location>
</feature>
<feature type="sequence variant" id="VAR_066827" description="In EDM1 and CTS2; reduced secretion in tendon cells and chondrocytes; dbSNP:rs28936368." evidence="19 20">
    <original>R</original>
    <variation>W</variation>
    <location>
        <position position="718"/>
    </location>
</feature>
<feature type="sequence variant" id="VAR_017103" description="In PSACH; severe; dbSNP:rs137852655." evidence="9">
    <original>G</original>
    <variation>D</variation>
    <location>
        <position position="719"/>
    </location>
</feature>
<feature type="sequence variant" id="VAR_066828" description="In PSACH; dbSNP:rs312262904." evidence="19">
    <original>G</original>
    <variation>S</variation>
    <location>
        <position position="719"/>
    </location>
</feature>
<feature type="sequence variant" id="VAR_066829" description="In a patient with multiple epiphyseal dysplasia; dbSNP:rs61752496." evidence="19">
    <original>Q</original>
    <variation>R</variation>
    <location>
        <position position="756"/>
    </location>
</feature>
<feature type="sequence conflict" description="In Ref. 1; AAA57253 and 2; BAC53888." evidence="33" ref="1 2">
    <original>A</original>
    <variation>R</variation>
    <location>
        <position position="256"/>
    </location>
</feature>
<feature type="sequence conflict" description="In Ref. 7; AAB35270." evidence="33" ref="7">
    <original>D</original>
    <variation>Y</variation>
    <location>
        <position position="340"/>
    </location>
</feature>
<feature type="strand" evidence="36">
    <location>
        <begin position="232"/>
        <end position="234"/>
    </location>
</feature>
<feature type="strand" evidence="36">
    <location>
        <begin position="241"/>
        <end position="245"/>
    </location>
</feature>
<feature type="strand" evidence="36">
    <location>
        <begin position="251"/>
        <end position="255"/>
    </location>
</feature>
<feature type="strand" evidence="36">
    <location>
        <begin position="259"/>
        <end position="265"/>
    </location>
</feature>
<feature type="strand" evidence="36">
    <location>
        <begin position="272"/>
        <end position="274"/>
    </location>
</feature>
<feature type="helix" evidence="36">
    <location>
        <begin position="285"/>
        <end position="287"/>
    </location>
</feature>
<feature type="strand" evidence="36">
    <location>
        <begin position="291"/>
        <end position="295"/>
    </location>
</feature>
<feature type="strand" evidence="36">
    <location>
        <begin position="306"/>
        <end position="308"/>
    </location>
</feature>
<feature type="helix" evidence="36">
    <location>
        <begin position="310"/>
        <end position="312"/>
    </location>
</feature>
<feature type="turn" evidence="36">
    <location>
        <begin position="314"/>
        <end position="317"/>
    </location>
</feature>
<feature type="strand" evidence="36">
    <location>
        <begin position="319"/>
        <end position="321"/>
    </location>
</feature>
<feature type="helix" evidence="36">
    <location>
        <begin position="323"/>
        <end position="325"/>
    </location>
</feature>
<feature type="strand" evidence="36">
    <location>
        <begin position="327"/>
        <end position="331"/>
    </location>
</feature>
<feature type="strand" evidence="36">
    <location>
        <begin position="342"/>
        <end position="344"/>
    </location>
</feature>
<feature type="helix" evidence="36">
    <location>
        <begin position="346"/>
        <end position="348"/>
    </location>
</feature>
<feature type="strand" evidence="36">
    <location>
        <begin position="364"/>
        <end position="367"/>
    </location>
</feature>
<feature type="helix" evidence="36">
    <location>
        <begin position="369"/>
        <end position="371"/>
    </location>
</feature>
<feature type="strand" evidence="36">
    <location>
        <begin position="378"/>
        <end position="380"/>
    </location>
</feature>
<feature type="strand" evidence="36">
    <location>
        <begin position="401"/>
        <end position="403"/>
    </location>
</feature>
<feature type="helix" evidence="36">
    <location>
        <begin position="405"/>
        <end position="407"/>
    </location>
</feature>
<feature type="strand" evidence="36">
    <location>
        <begin position="424"/>
        <end position="426"/>
    </location>
</feature>
<feature type="turn" evidence="36">
    <location>
        <begin position="428"/>
        <end position="430"/>
    </location>
</feature>
<feature type="helix" evidence="36">
    <location>
        <begin position="443"/>
        <end position="445"/>
    </location>
</feature>
<feature type="strand" evidence="36">
    <location>
        <begin position="462"/>
        <end position="464"/>
    </location>
</feature>
<feature type="turn" evidence="36">
    <location>
        <begin position="466"/>
        <end position="468"/>
    </location>
</feature>
<feature type="strand" evidence="36">
    <location>
        <begin position="470"/>
        <end position="473"/>
    </location>
</feature>
<feature type="strand" evidence="36">
    <location>
        <begin position="475"/>
        <end position="477"/>
    </location>
</feature>
<feature type="helix" evidence="36">
    <location>
        <begin position="479"/>
        <end position="481"/>
    </location>
</feature>
<feature type="strand" evidence="36">
    <location>
        <begin position="495"/>
        <end position="500"/>
    </location>
</feature>
<feature type="turn" evidence="36">
    <location>
        <begin position="503"/>
        <end position="506"/>
    </location>
</feature>
<feature type="strand" evidence="36">
    <location>
        <begin position="511"/>
        <end position="513"/>
    </location>
</feature>
<feature type="helix" evidence="36">
    <location>
        <begin position="515"/>
        <end position="517"/>
    </location>
</feature>
<feature type="strand" evidence="36">
    <location>
        <begin position="532"/>
        <end position="540"/>
    </location>
</feature>
<feature type="strand" evidence="36">
    <location>
        <begin position="551"/>
        <end position="553"/>
    </location>
</feature>
<feature type="turn" evidence="36">
    <location>
        <begin position="555"/>
        <end position="557"/>
    </location>
</feature>
<feature type="strand" evidence="36">
    <location>
        <begin position="560"/>
        <end position="562"/>
    </location>
</feature>
<feature type="strand" evidence="36">
    <location>
        <begin position="567"/>
        <end position="588"/>
    </location>
</feature>
<feature type="strand" evidence="36">
    <location>
        <begin position="596"/>
        <end position="605"/>
    </location>
</feature>
<feature type="strand" evidence="36">
    <location>
        <begin position="608"/>
        <end position="617"/>
    </location>
</feature>
<feature type="strand" evidence="36">
    <location>
        <begin position="625"/>
        <end position="627"/>
    </location>
</feature>
<feature type="strand" evidence="36">
    <location>
        <begin position="636"/>
        <end position="641"/>
    </location>
</feature>
<feature type="helix" evidence="36">
    <location>
        <begin position="648"/>
        <end position="655"/>
    </location>
</feature>
<feature type="strand" evidence="36">
    <location>
        <begin position="656"/>
        <end position="658"/>
    </location>
</feature>
<feature type="turn" evidence="36">
    <location>
        <begin position="661"/>
        <end position="663"/>
    </location>
</feature>
<feature type="strand" evidence="36">
    <location>
        <begin position="664"/>
        <end position="669"/>
    </location>
</feature>
<feature type="strand" evidence="36">
    <location>
        <begin position="681"/>
        <end position="689"/>
    </location>
</feature>
<feature type="helix" evidence="36">
    <location>
        <begin position="690"/>
        <end position="692"/>
    </location>
</feature>
<feature type="strand" evidence="36">
    <location>
        <begin position="694"/>
        <end position="701"/>
    </location>
</feature>
<feature type="strand" evidence="36">
    <location>
        <begin position="704"/>
        <end position="708"/>
    </location>
</feature>
<feature type="strand" evidence="36">
    <location>
        <begin position="716"/>
        <end position="728"/>
    </location>
</feature>
<feature type="strand" evidence="36">
    <location>
        <begin position="732"/>
        <end position="741"/>
    </location>
</feature>
<feature type="helix" evidence="36">
    <location>
        <begin position="748"/>
        <end position="754"/>
    </location>
</feature>
<reference key="1">
    <citation type="journal article" date="1994" name="Genomics">
        <title>Characterization of human and mouse cartilage oligomeric matrix protein.</title>
        <authorList>
            <person name="Newton G."/>
            <person name="Weremowicz S."/>
            <person name="Morton C.C."/>
            <person name="Copeland N.G."/>
            <person name="Gilbert D.J."/>
            <person name="Jenkins N.A."/>
            <person name="Lawler J."/>
        </authorList>
    </citation>
    <scope>NUCLEOTIDE SEQUENCE [MRNA] (ISOFORM 1)</scope>
    <scope>VARIANTS ASP-50; TRP-51; GLY-109; GLY-224 AND PRO-285</scope>
    <source>
        <tissue>Cartilage</tissue>
    </source>
</reference>
<reference key="2">
    <citation type="submission" date="2002-06" db="EMBL/GenBank/DDBJ databases">
        <title>Human comp cDNA with 5 SNIPs.</title>
        <authorList>
            <person name="Hashimoto Y."/>
            <person name="Mori H."/>
        </authorList>
    </citation>
    <scope>NUCLEOTIDE SEQUENCE [MRNA] (ISOFORM 1)</scope>
    <scope>VARIANTS ASP-50; TRP-51; GLY-109; GLY-224 AND PRO-285</scope>
</reference>
<reference key="3">
    <citation type="journal article" date="2004" name="Nat. Genet.">
        <title>Complete sequencing and characterization of 21,243 full-length human cDNAs.</title>
        <authorList>
            <person name="Ota T."/>
            <person name="Suzuki Y."/>
            <person name="Nishikawa T."/>
            <person name="Otsuki T."/>
            <person name="Sugiyama T."/>
            <person name="Irie R."/>
            <person name="Wakamatsu A."/>
            <person name="Hayashi K."/>
            <person name="Sato H."/>
            <person name="Nagai K."/>
            <person name="Kimura K."/>
            <person name="Makita H."/>
            <person name="Sekine M."/>
            <person name="Obayashi M."/>
            <person name="Nishi T."/>
            <person name="Shibahara T."/>
            <person name="Tanaka T."/>
            <person name="Ishii S."/>
            <person name="Yamamoto J."/>
            <person name="Saito K."/>
            <person name="Kawai Y."/>
            <person name="Isono Y."/>
            <person name="Nakamura Y."/>
            <person name="Nagahari K."/>
            <person name="Murakami K."/>
            <person name="Yasuda T."/>
            <person name="Iwayanagi T."/>
            <person name="Wagatsuma M."/>
            <person name="Shiratori A."/>
            <person name="Sudo H."/>
            <person name="Hosoiri T."/>
            <person name="Kaku Y."/>
            <person name="Kodaira H."/>
            <person name="Kondo H."/>
            <person name="Sugawara M."/>
            <person name="Takahashi M."/>
            <person name="Kanda K."/>
            <person name="Yokoi T."/>
            <person name="Furuya T."/>
            <person name="Kikkawa E."/>
            <person name="Omura Y."/>
            <person name="Abe K."/>
            <person name="Kamihara K."/>
            <person name="Katsuta N."/>
            <person name="Sato K."/>
            <person name="Tanikawa M."/>
            <person name="Yamazaki M."/>
            <person name="Ninomiya K."/>
            <person name="Ishibashi T."/>
            <person name="Yamashita H."/>
            <person name="Murakawa K."/>
            <person name="Fujimori K."/>
            <person name="Tanai H."/>
            <person name="Kimata M."/>
            <person name="Watanabe M."/>
            <person name="Hiraoka S."/>
            <person name="Chiba Y."/>
            <person name="Ishida S."/>
            <person name="Ono Y."/>
            <person name="Takiguchi S."/>
            <person name="Watanabe S."/>
            <person name="Yosida M."/>
            <person name="Hotuta T."/>
            <person name="Kusano J."/>
            <person name="Kanehori K."/>
            <person name="Takahashi-Fujii A."/>
            <person name="Hara H."/>
            <person name="Tanase T.-O."/>
            <person name="Nomura Y."/>
            <person name="Togiya S."/>
            <person name="Komai F."/>
            <person name="Hara R."/>
            <person name="Takeuchi K."/>
            <person name="Arita M."/>
            <person name="Imose N."/>
            <person name="Musashino K."/>
            <person name="Yuuki H."/>
            <person name="Oshima A."/>
            <person name="Sasaki N."/>
            <person name="Aotsuka S."/>
            <person name="Yoshikawa Y."/>
            <person name="Matsunawa H."/>
            <person name="Ichihara T."/>
            <person name="Shiohata N."/>
            <person name="Sano S."/>
            <person name="Moriya S."/>
            <person name="Momiyama H."/>
            <person name="Satoh N."/>
            <person name="Takami S."/>
            <person name="Terashima Y."/>
            <person name="Suzuki O."/>
            <person name="Nakagawa S."/>
            <person name="Senoh A."/>
            <person name="Mizoguchi H."/>
            <person name="Goto Y."/>
            <person name="Shimizu F."/>
            <person name="Wakebe H."/>
            <person name="Hishigaki H."/>
            <person name="Watanabe T."/>
            <person name="Sugiyama A."/>
            <person name="Takemoto M."/>
            <person name="Kawakami B."/>
            <person name="Yamazaki M."/>
            <person name="Watanabe K."/>
            <person name="Kumagai A."/>
            <person name="Itakura S."/>
            <person name="Fukuzumi Y."/>
            <person name="Fujimori Y."/>
            <person name="Komiyama M."/>
            <person name="Tashiro H."/>
            <person name="Tanigami A."/>
            <person name="Fujiwara T."/>
            <person name="Ono T."/>
            <person name="Yamada K."/>
            <person name="Fujii Y."/>
            <person name="Ozaki K."/>
            <person name="Hirao M."/>
            <person name="Ohmori Y."/>
            <person name="Kawabata A."/>
            <person name="Hikiji T."/>
            <person name="Kobatake N."/>
            <person name="Inagaki H."/>
            <person name="Ikema Y."/>
            <person name="Okamoto S."/>
            <person name="Okitani R."/>
            <person name="Kawakami T."/>
            <person name="Noguchi S."/>
            <person name="Itoh T."/>
            <person name="Shigeta K."/>
            <person name="Senba T."/>
            <person name="Matsumura K."/>
            <person name="Nakajima Y."/>
            <person name="Mizuno T."/>
            <person name="Morinaga M."/>
            <person name="Sasaki M."/>
            <person name="Togashi T."/>
            <person name="Oyama M."/>
            <person name="Hata H."/>
            <person name="Watanabe M."/>
            <person name="Komatsu T."/>
            <person name="Mizushima-Sugano J."/>
            <person name="Satoh T."/>
            <person name="Shirai Y."/>
            <person name="Takahashi Y."/>
            <person name="Nakagawa K."/>
            <person name="Okumura K."/>
            <person name="Nagase T."/>
            <person name="Nomura N."/>
            <person name="Kikuchi H."/>
            <person name="Masuho Y."/>
            <person name="Yamashita R."/>
            <person name="Nakai K."/>
            <person name="Yada T."/>
            <person name="Nakamura Y."/>
            <person name="Ohara O."/>
            <person name="Isogai T."/>
            <person name="Sugano S."/>
        </authorList>
    </citation>
    <scope>NUCLEOTIDE SEQUENCE [LARGE SCALE MRNA] (ISOFORM 2)</scope>
</reference>
<reference key="4">
    <citation type="journal article" date="2004" name="Nature">
        <title>The DNA sequence and biology of human chromosome 19.</title>
        <authorList>
            <person name="Grimwood J."/>
            <person name="Gordon L.A."/>
            <person name="Olsen A.S."/>
            <person name="Terry A."/>
            <person name="Schmutz J."/>
            <person name="Lamerdin J.E."/>
            <person name="Hellsten U."/>
            <person name="Goodstein D."/>
            <person name="Couronne O."/>
            <person name="Tran-Gyamfi M."/>
            <person name="Aerts A."/>
            <person name="Altherr M."/>
            <person name="Ashworth L."/>
            <person name="Bajorek E."/>
            <person name="Black S."/>
            <person name="Branscomb E."/>
            <person name="Caenepeel S."/>
            <person name="Carrano A.V."/>
            <person name="Caoile C."/>
            <person name="Chan Y.M."/>
            <person name="Christensen M."/>
            <person name="Cleland C.A."/>
            <person name="Copeland A."/>
            <person name="Dalin E."/>
            <person name="Dehal P."/>
            <person name="Denys M."/>
            <person name="Detter J.C."/>
            <person name="Escobar J."/>
            <person name="Flowers D."/>
            <person name="Fotopulos D."/>
            <person name="Garcia C."/>
            <person name="Georgescu A.M."/>
            <person name="Glavina T."/>
            <person name="Gomez M."/>
            <person name="Gonzales E."/>
            <person name="Groza M."/>
            <person name="Hammon N."/>
            <person name="Hawkins T."/>
            <person name="Haydu L."/>
            <person name="Ho I."/>
            <person name="Huang W."/>
            <person name="Israni S."/>
            <person name="Jett J."/>
            <person name="Kadner K."/>
            <person name="Kimball H."/>
            <person name="Kobayashi A."/>
            <person name="Larionov V."/>
            <person name="Leem S.-H."/>
            <person name="Lopez F."/>
            <person name="Lou Y."/>
            <person name="Lowry S."/>
            <person name="Malfatti S."/>
            <person name="Martinez D."/>
            <person name="McCready P.M."/>
            <person name="Medina C."/>
            <person name="Morgan J."/>
            <person name="Nelson K."/>
            <person name="Nolan M."/>
            <person name="Ovcharenko I."/>
            <person name="Pitluck S."/>
            <person name="Pollard M."/>
            <person name="Popkie A.P."/>
            <person name="Predki P."/>
            <person name="Quan G."/>
            <person name="Ramirez L."/>
            <person name="Rash S."/>
            <person name="Retterer J."/>
            <person name="Rodriguez A."/>
            <person name="Rogers S."/>
            <person name="Salamov A."/>
            <person name="Salazar A."/>
            <person name="She X."/>
            <person name="Smith D."/>
            <person name="Slezak T."/>
            <person name="Solovyev V."/>
            <person name="Thayer N."/>
            <person name="Tice H."/>
            <person name="Tsai M."/>
            <person name="Ustaszewska A."/>
            <person name="Vo N."/>
            <person name="Wagner M."/>
            <person name="Wheeler J."/>
            <person name="Wu K."/>
            <person name="Xie G."/>
            <person name="Yang J."/>
            <person name="Dubchak I."/>
            <person name="Furey T.S."/>
            <person name="DeJong P."/>
            <person name="Dickson M."/>
            <person name="Gordon D."/>
            <person name="Eichler E.E."/>
            <person name="Pennacchio L.A."/>
            <person name="Richardson P."/>
            <person name="Stubbs L."/>
            <person name="Rokhsar D.S."/>
            <person name="Myers R.M."/>
            <person name="Rubin E.M."/>
            <person name="Lucas S.M."/>
        </authorList>
    </citation>
    <scope>NUCLEOTIDE SEQUENCE [LARGE SCALE GENOMIC DNA]</scope>
</reference>
<reference key="5">
    <citation type="submission" date="2005-07" db="EMBL/GenBank/DDBJ databases">
        <authorList>
            <person name="Mural R.J."/>
            <person name="Istrail S."/>
            <person name="Sutton G.G."/>
            <person name="Florea L."/>
            <person name="Halpern A.L."/>
            <person name="Mobarry C.M."/>
            <person name="Lippert R."/>
            <person name="Walenz B."/>
            <person name="Shatkay H."/>
            <person name="Dew I."/>
            <person name="Miller J.R."/>
            <person name="Flanigan M.J."/>
            <person name="Edwards N.J."/>
            <person name="Bolanos R."/>
            <person name="Fasulo D."/>
            <person name="Halldorsson B.V."/>
            <person name="Hannenhalli S."/>
            <person name="Turner R."/>
            <person name="Yooseph S."/>
            <person name="Lu F."/>
            <person name="Nusskern D.R."/>
            <person name="Shue B.C."/>
            <person name="Zheng X.H."/>
            <person name="Zhong F."/>
            <person name="Delcher A.L."/>
            <person name="Huson D.H."/>
            <person name="Kravitz S.A."/>
            <person name="Mouchard L."/>
            <person name="Reinert K."/>
            <person name="Remington K.A."/>
            <person name="Clark A.G."/>
            <person name="Waterman M.S."/>
            <person name="Eichler E.E."/>
            <person name="Adams M.D."/>
            <person name="Hunkapiller M.W."/>
            <person name="Myers E.W."/>
            <person name="Venter J.C."/>
        </authorList>
    </citation>
    <scope>NUCLEOTIDE SEQUENCE [LARGE SCALE GENOMIC DNA]</scope>
</reference>
<reference key="6">
    <citation type="journal article" date="2004" name="Genome Res.">
        <title>The status, quality, and expansion of the NIH full-length cDNA project: the Mammalian Gene Collection (MGC).</title>
        <authorList>
            <consortium name="The MGC Project Team"/>
        </authorList>
    </citation>
    <scope>NUCLEOTIDE SEQUENCE [LARGE SCALE MRNA] (ISOFORM 1)</scope>
    <source>
        <tissue>Ovary</tissue>
    </source>
</reference>
<reference key="7">
    <citation type="journal article" date="1995" name="Nat. Genet.">
        <title>Pseudoachondroplasia and multiple epiphyseal dysplasia due to mutations in the cartilage oligomeric matrix protein gene.</title>
        <authorList>
            <person name="Briggs M.D."/>
            <person name="Hoffman S.M.G."/>
            <person name="King L.M."/>
            <person name="Olsen A.S."/>
            <person name="Mohrenweiser H."/>
            <person name="Leroy J.G."/>
            <person name="Mortier G.R."/>
            <person name="Rimoin D.L."/>
            <person name="Lachman R.S."/>
            <person name="Gaines E.S."/>
            <person name="Cekleniak J.A."/>
            <person name="Knowlton R.G."/>
            <person name="Cohn D.H."/>
        </authorList>
    </citation>
    <scope>NUCLEOTIDE SEQUENCE [GENOMIC DNA] OF 326-344</scope>
    <scope>VARIANT EDM1 TYR-342</scope>
    <scope>VARIANT PSACH ARG-328</scope>
</reference>
<reference key="8">
    <citation type="journal article" date="2000" name="J. Biol. Chem.">
        <title>Cartilage oligomeric matrix protein is a calcium-binding protein, and a mutation in its type 3 repeats causes conformational changes.</title>
        <authorList>
            <person name="Chen H."/>
            <person name="Deere M."/>
            <person name="Hecht J.T."/>
            <person name="Lawler J."/>
        </authorList>
    </citation>
    <scope>PROTEIN SEQUENCE OF 80-89</scope>
    <scope>SUBUNIT</scope>
    <scope>CALCIUM-BINDING</scope>
    <scope>CHARACTERIZATION OF VARIANT PSACH ASP-469 DEL</scope>
</reference>
<reference key="9">
    <citation type="journal article" date="2001" name="J. Biol. Chem.">
        <title>Mutations in cartilage oligomeric matrix protein causing pseudoachondroplasia and multiple epiphyseal dysplasia affect binding of calcium and collagen I, II, and IX.</title>
        <authorList>
            <person name="Thur J."/>
            <person name="Rosenberg K."/>
            <person name="Nitsche D.P."/>
            <person name="Pihlajamaa T."/>
            <person name="Ala-Kokko L."/>
            <person name="Heinegaard D."/>
            <person name="Paulsson M."/>
            <person name="Maurer P."/>
        </authorList>
    </citation>
    <scope>PROTEIN SEQUENCE</scope>
    <scope>CALCIUM-BINDING</scope>
    <scope>INTERACTION WITH COLLAGEN I; COLLAGEN II AND COLLAGEN IX</scope>
    <scope>CHARACTERIZATION OF VARIANT PSACH ASP-469 DEL</scope>
    <scope>CHARACTERIZATION OF VARIANT EDM1 TYR-361</scope>
</reference>
<reference key="10">
    <citation type="journal article" date="2002" name="Matrix Biol.">
        <title>Matrix-matrix interaction of cartilage oligomeric matrix protein and fibronectin.</title>
        <authorList>
            <person name="Di Cesare P.E."/>
            <person name="Chen F.S."/>
            <person name="Moergelin M."/>
            <person name="Carlson C.S."/>
            <person name="Leslie M.P."/>
            <person name="Perris R."/>
            <person name="Fang C."/>
        </authorList>
    </citation>
    <scope>INTERACTION WITH FN1</scope>
</reference>
<reference key="11">
    <citation type="journal article" date="2004" name="J. Biol. Chem.">
        <title>Interactions between the cartilage oligomeric matrix protein and matrilins. Implications for matrix assembly and the pathogenesis of chondrodysplasias.</title>
        <authorList>
            <person name="Mann H.H."/>
            <person name="Oezbek S."/>
            <person name="Engel J."/>
            <person name="Paulsson M."/>
            <person name="Wagener R."/>
        </authorList>
    </citation>
    <scope>INTERACTION WITH MATN1; MATN3 AND MATN4</scope>
</reference>
<reference key="12">
    <citation type="journal article" date="2005" name="J. Biol. Chem.">
        <title>Cartilage oligomeric matrix protein/thrombospondin 5 supports chondrocyte attachment through interaction with integrins.</title>
        <authorList>
            <person name="Chen F.-H."/>
            <person name="Thomas A.O."/>
            <person name="Hecht J.T."/>
            <person name="Goldring M.B."/>
            <person name="Lawler J."/>
        </authorList>
    </citation>
    <scope>FUNCTION</scope>
    <scope>INTERACTION WITH ITGB3 AND ITGA5</scope>
</reference>
<reference key="13">
    <citation type="journal article" date="2006" name="Arthritis Res. Ther.">
        <title>Cartilage oligomeric matrix protein is involved in human limb development and in the pathogenesis of osteoarthritis.</title>
        <authorList>
            <person name="Koelling S."/>
            <person name="Clauditz T.S."/>
            <person name="Kaste M."/>
            <person name="Miosge N."/>
        </authorList>
    </citation>
    <scope>FUNCTION</scope>
    <scope>TISSUE SPECIFICITY</scope>
    <scope>DEVELOPMENTAL STAGE</scope>
</reference>
<reference key="14">
    <citation type="journal article" date="2006" name="J. Biol. Chem.">
        <title>ADAMTS-12 associates with and degrades cartilage oligomeric matrix protein.</title>
        <authorList>
            <person name="Liu C.-J."/>
            <person name="Kong W."/>
            <person name="Xu K."/>
            <person name="Luan Y."/>
            <person name="Ilalov K."/>
            <person name="Sehgal B."/>
            <person name="Yu S."/>
            <person name="Howell R.D."/>
            <person name="Di Cesare P.E."/>
        </authorList>
    </citation>
    <scope>INTERACTION WITH ADAMTS12</scope>
</reference>
<reference key="15">
    <citation type="journal article" date="2007" name="J. Biol. Chem.">
        <title>Interaction of cartilage oligomeric matrix protein/thrombospondin 5 with aggrecan.</title>
        <authorList>
            <person name="Chen F.-H."/>
            <person name="Herndon M.E."/>
            <person name="Patel N."/>
            <person name="Hecht J.T."/>
            <person name="Tuan R.S."/>
            <person name="Lawler J."/>
        </authorList>
    </citation>
    <scope>INTERACTION WITH ACAN; HEPARIN; HEPARAN SULFATE AND CHONDROITIN SULFATE</scope>
</reference>
<reference key="16">
    <citation type="journal article" date="2008" name="J. Biol. Chem.">
        <title>Cartilage oligomeric matrix protein protects cells against death by elevating members of the IAP family of survival proteins.</title>
        <authorList>
            <person name="Gagarina V."/>
            <person name="Carlberg A.L."/>
            <person name="Pereira-Mouries L."/>
            <person name="Hall D.J."/>
        </authorList>
    </citation>
    <scope>FUNCTION</scope>
    <scope>DOMAINS</scope>
</reference>
<reference key="17">
    <citation type="journal article" date="2014" name="J. Proteomics">
        <title>An enzyme assisted RP-RPLC approach for in-depth analysis of human liver phosphoproteome.</title>
        <authorList>
            <person name="Bian Y."/>
            <person name="Song C."/>
            <person name="Cheng K."/>
            <person name="Dong M."/>
            <person name="Wang F."/>
            <person name="Huang J."/>
            <person name="Sun D."/>
            <person name="Wang L."/>
            <person name="Ye M."/>
            <person name="Zou H."/>
        </authorList>
    </citation>
    <scope>IDENTIFICATION BY MASS SPECTROMETRY [LARGE SCALE ANALYSIS]</scope>
    <source>
        <tissue>Liver</tissue>
    </source>
</reference>
<reference key="18">
    <citation type="journal article" date="2025" name="Matrix Biol.">
        <title>Cleavage of Cartilage Oligomeric Matrix Protein (COMP) by ADAMTS4 generates a neoepitope associated with osteoarthritis and other forms of degenerative joint disease.</title>
        <authorList>
            <person name="de Groot R."/>
            <person name="Folgado P.B."/>
            <person name="Yamamoto K."/>
            <person name="Martin D.R."/>
            <person name="Koch C.D."/>
            <person name="Debruin D."/>
            <person name="Blagg S."/>
            <person name="Minns A.F."/>
            <person name="Bhutada S."/>
            <person name="Ahnstroem J."/>
            <person name="Larkin J."/>
            <person name="Aspberg A."/>
            <person name="Oennerfjord P."/>
            <person name="Apte S.S."/>
            <person name="Santamaria S."/>
        </authorList>
    </citation>
    <scope>PROTEOLYTIC CLEAVAGE BY ADAMTS4 AND ADAMTS1</scope>
</reference>
<reference key="19">
    <citation type="journal article" date="2009" name="FASEB J.">
        <title>The crystal structure of the signature domain of cartilage oligomeric matrix protein: implications for collagen, glycosaminoglycan and integrin binding.</title>
        <authorList>
            <person name="Tan K."/>
            <person name="Duquette M."/>
            <person name="Joachimiak A."/>
            <person name="Lawler J."/>
        </authorList>
    </citation>
    <scope>X-RAY CRYSTALLOGRAPHY (3.15 ANGSTROMS) OF 225-757 IN COMPLEX WITH CALCIUM IONS</scope>
    <scope>DISULFIDE BONDS</scope>
    <scope>GLYCOSYLATION AT ASN-742</scope>
</reference>
<reference key="20">
    <citation type="journal article" date="1995" name="Nat. Genet.">
        <title>Mutations in exon 17B of cartilage oligomeric matrix protein (COMP) cause pseudoachondroplasia.</title>
        <authorList>
            <person name="Hecht J.T."/>
            <person name="Nelson L.D."/>
            <person name="Crowder E."/>
            <person name="Wang Y."/>
            <person name="Elder F.F.B."/>
            <person name="Harrison W.R."/>
            <person name="Francomano C.A."/>
            <person name="Prange C.K."/>
            <person name="Lennon G.G."/>
            <person name="Deere M."/>
            <person name="Lawler J."/>
        </authorList>
    </citation>
    <scope>VARIANTS PSACH SER-459 DEL; TYR-468 AND TYR-472</scope>
</reference>
<reference key="21">
    <citation type="journal article" date="1997" name="Am. J. Med. Genet.">
        <title>Multiple epiphyseal dysplasia, ribbing type: a novel point mutation in the COMP gene in a South African family.</title>
        <authorList>
            <person name="Ballo R."/>
            <person name="Briggs M.D."/>
            <person name="Cohn D.H."/>
            <person name="Knowlton R.G."/>
            <person name="Beighton P.H."/>
            <person name="Ramesar R.S."/>
        </authorList>
    </citation>
    <scope>VARIANT EDM1 LYS-523</scope>
</reference>
<reference key="22">
    <citation type="journal article" date="1997" name="Clin. Genet.">
        <title>Multiple epiphyseal dysplasia and pseudoachondroplasia due to novel mutations in the calmodulin-like repeats of cartilage oligomeric matrix protein.</title>
        <authorList>
            <person name="Susic S."/>
            <person name="McGrory J."/>
            <person name="Ahier J."/>
            <person name="Cole W.G."/>
        </authorList>
    </citation>
    <scope>VARIANT EDM1 SER-371</scope>
    <scope>VARIANT PSACH 513-VAL--LYS-516 DEL</scope>
</reference>
<reference key="23">
    <citation type="journal article" date="1998" name="Am. J. Hum. Genet.">
        <title>Diverse mutations in the gene for cartilage oligomeric matrix protein in the pseudoachondroplasia-multiple epiphyseal dysplasia disease spectrum.</title>
        <authorList>
            <person name="Briggs M.D."/>
            <person name="Mortier G.R."/>
            <person name="Cole W.G."/>
            <person name="King L.M."/>
            <person name="Golik S.S."/>
            <person name="Bonaventure J."/>
            <person name="Nuytinck L."/>
            <person name="de Paepe A."/>
            <person name="Leroy J.G."/>
            <person name="Biesecker L."/>
            <person name="Lipson M."/>
            <person name="Wilcox W.R."/>
            <person name="Lachman R.S."/>
            <person name="Rimoin D.L."/>
            <person name="Knowlton R.G."/>
            <person name="Cohn D.H."/>
        </authorList>
    </citation>
    <scope>VARIANTS PSACH</scope>
    <scope>VARIANTS EDM1 SER-453 AND ARG-585</scope>
    <scope>VARIANT PSACH GLU-440</scope>
</reference>
<reference key="24">
    <citation type="journal article" date="1998" name="Hum. Genet.">
        <title>Novel and recurrent COMP (cartilage oligomeric matrix protein) mutations in pseudoachondroplasia and multiple epiphyseal dysplasia.</title>
        <authorList>
            <person name="Ikegawa S."/>
            <person name="Ohashi H."/>
            <person name="Nishimura G."/>
            <person name="Kim K.C."/>
            <person name="Sannohe A."/>
            <person name="Kimizuka M."/>
            <person name="Fukushima Y."/>
            <person name="Nagai T."/>
            <person name="Nakamura Y."/>
        </authorList>
    </citation>
    <scope>VARIANTS PSACH AND EDM1</scope>
    <scope>VARIANTS PSACH ASN-290; VAL-349; GLY-387; GLY-473 AND ASN-518</scope>
    <scope>VARIANT EDM1 VAL-361</scope>
</reference>
<reference key="25">
    <citation type="journal article" date="1998" name="Hum. Mutat. Suppl.">
        <title>Identification of five novel mutations in cartilage oligomeric matrix protein gene in pseudoachondroplasia and multiple epiphyseal dysplasia.</title>
        <authorList>
            <person name="Loughlin J."/>
            <person name="Irven C."/>
            <person name="Mustafa Z."/>
            <person name="Briggs M.D."/>
            <person name="Carr A."/>
            <person name="Lynch S.-A."/>
            <person name="Knowlton R.G."/>
            <person name="Cohn D.H."/>
            <person name="Sykes B."/>
        </authorList>
    </citation>
    <scope>VARIANTS PSACH ARG-328; ASP-372 DEL; 391-PRO--ASP-394 DELINS VAL; ARG-440; SER-459 DEL; TYR-468; ASP-469 DEL AND TYR-472</scope>
    <scope>VARIANTS EDM1 TYR-342; TYR-361; 367-ARG-GLY-368 DEL AND TYR-408</scope>
</reference>
<reference key="26">
    <citation type="journal article" date="1998" name="Hum. Mutat. Suppl.">
        <title>Pseudoachondroplasia due to the substitution of the highly conserved Asp482 by Gly in the seventh calmodulin-like repeat of cartilage oligomeric matrix protein.</title>
        <authorList>
            <person name="Susic S."/>
            <person name="Ahier J."/>
            <person name="Cole W.G."/>
        </authorList>
    </citation>
    <scope>VARIANT PSACH GLY-482</scope>
</reference>
<reference key="27">
    <citation type="journal article" date="2001" name="Am. J. Med. Genet.">
        <title>Double heterozygosity for pseudoachondroplasia and spondyloepiphyseal dysplasia congenita.</title>
        <authorList>
            <person name="Unger S."/>
            <person name="Koerkkoe J."/>
            <person name="Krakow D."/>
            <person name="Lachman R.S."/>
            <person name="Rimoin D.L."/>
            <person name="Cohn D.H."/>
        </authorList>
    </citation>
    <scope>VARIANT PSACH ARG-348</scope>
</reference>
<reference key="28">
    <citation type="journal article" date="2001" name="Am. J. Med. Genet.">
        <title>Novel mutation in exon 18 of the cartilage oligomeric matrix protein gene causes a severe pseudoachondroplasia.</title>
        <authorList>
            <person name="Mabuchi A."/>
            <person name="Haga N."/>
            <person name="Ikeda T."/>
            <person name="Manabe N."/>
            <person name="Ohashi H."/>
            <person name="Takatori Y."/>
            <person name="Nakamura K."/>
            <person name="Ikegawa S."/>
        </authorList>
    </citation>
    <scope>VARIANT PSACH ASP-719</scope>
</reference>
<reference key="29">
    <citation type="journal article" date="2001" name="Am. J. Hum. Genet.">
        <title>A mutation in COL9A1 causes multiple epiphyseal dysplasia: further evidence for locus heterogeneity.</title>
        <authorList>
            <person name="Czarny-Ratajczak M."/>
            <person name="Lohiniva J."/>
            <person name="Rogala P."/>
            <person name="Kozlowski K."/>
            <person name="Peraelae M."/>
            <person name="Carter L."/>
            <person name="Spector T.D."/>
            <person name="Kolodziej L."/>
            <person name="Seppaenen U."/>
            <person name="Glazar R."/>
            <person name="Krolewski J."/>
            <person name="Latos-Bielenska A."/>
            <person name="Ala-Kokko L."/>
        </authorList>
    </citation>
    <scope>VARIANTS EDM1 ARG-276; ALA-420 AND MET-585</scope>
</reference>
<reference key="30">
    <citation type="journal article" date="2012" name="Hum. Mutat.">
        <title>Pseudoachondroplasia and multiple epiphyseal dysplasia: A 7-year comprehensive analysis of the known disease genes identify novel and recurrent mutations and provides an accurate assessment of their relative contribution.</title>
        <authorList>
            <person name="Jackson G.C."/>
            <person name="Mittaz-Crettol L."/>
            <person name="Taylor J.A."/>
            <person name="Mortier G.R."/>
            <person name="Spranger J."/>
            <person name="Zabel B."/>
            <person name="Le Merrer M."/>
            <person name="Cormier-Daire V."/>
            <person name="Hall C.M."/>
            <person name="Offiah A."/>
            <person name="Wright M.J."/>
            <person name="Savarirayan R."/>
            <person name="Nishimura G."/>
            <person name="Ramsden S.C."/>
            <person name="Elles R."/>
            <person name="Bonafe L."/>
            <person name="Superti-Furga A."/>
            <person name="Unger S."/>
            <person name="Zankl A."/>
            <person name="Briggs M.D."/>
        </authorList>
    </citation>
    <scope>VARIANTS PSACH SER-234; GLY-290; ARG-299; TYR-326; 341-GLU-ASP-342 DEL; 350-ASN--ASP-372 DEL; VAL-378; ARG-387; 402-GLY--GLY-404 DELINS VAL-CYS; ARG-440; ASN-446; SER-448; ASP-473 DEL; HIS-473; ASN-475; GLY-482; GLY-507; GLY-511; GLY-515; ILE-529; ARG-585 AND SER-719</scope>
    <scope>VARIANTS EDM1 GLU-167; ARG-276; LEU-298; ASP-311; GLY-317; GLY-326; PHE-348; SER-371; TYR-371; ASN-374; ASN-376; ASN-385; ASP-385 DEL; TYR-385; HIS-397; ARG-404; TYR-410; LYS-415; GLU-427; 430-CYS--SER-432 DELINS LEU-TRP-CYS; GLU-457 DEL; ASP-473 INS; ASP-501; LYS-523; MET-585; PRO-718 AND TRP-718</scope>
    <scope>VARIANT ARG-756</scope>
</reference>
<reference key="31">
    <citation type="journal article" date="2020" name="Nat. Commun.">
        <title>Mutations in COMP cause familial carpal tunnel syndrome.</title>
        <authorList>
            <person name="Li C."/>
            <person name="Wang N."/>
            <person name="Schaeffer A.A."/>
            <person name="Liu X."/>
            <person name="Zhao Z."/>
            <person name="Elliott G."/>
            <person name="Garrett L."/>
            <person name="Choi N.T."/>
            <person name="Wang Y."/>
            <person name="Wang Y."/>
            <person name="Wang C."/>
            <person name="Wang J."/>
            <person name="Chan D."/>
            <person name="Su P."/>
            <person name="Cui S."/>
            <person name="Yang Y."/>
            <person name="Gao B."/>
        </authorList>
    </citation>
    <scope>VARIANTS CTS2 GLU-66 AND TRP-718</scope>
    <scope>CHARACTERIZATION OF VARIANTS CTS2 GLU-66 AND TRP-718</scope>
    <scope>FUNCTION</scope>
    <scope>SUBUNIT</scope>
    <scope>SUBCELLULAR LOCATION</scope>
    <scope>TISSUE SPECIFICITY</scope>
</reference>
<reference key="32">
    <citation type="journal article" date="2020" name="Nat. Commun.">
        <title>Author Correction: Mutations in COMP cause familial carpal tunnel syndrome.</title>
        <authorList>
            <person name="Li C."/>
            <person name="Wang N."/>
            <person name="Schaeffer A.A."/>
            <person name="Liu X."/>
            <person name="Zhao Z."/>
            <person name="Elliott G."/>
            <person name="Garrett L."/>
            <person name="Choi N.T."/>
            <person name="Wang Y."/>
            <person name="Wang Y."/>
            <person name="Wang C."/>
            <person name="Wang J."/>
            <person name="Chan D."/>
            <person name="Su P."/>
            <person name="Cui S."/>
            <person name="Yang Y."/>
            <person name="Gao B."/>
        </authorList>
    </citation>
    <scope>ERRATUM OF PUBMED:32686688</scope>
</reference>
<name>COMP_HUMAN</name>
<dbReference type="EMBL" id="L32137">
    <property type="protein sequence ID" value="AAA57253.1"/>
    <property type="molecule type" value="mRNA"/>
</dbReference>
<dbReference type="EMBL" id="AB086984">
    <property type="protein sequence ID" value="BAC53888.1"/>
    <property type="molecule type" value="mRNA"/>
</dbReference>
<dbReference type="EMBL" id="AK296586">
    <property type="protein sequence ID" value="BAG59205.1"/>
    <property type="molecule type" value="mRNA"/>
</dbReference>
<dbReference type="EMBL" id="AC003107">
    <property type="protein sequence ID" value="AAB86501.1"/>
    <property type="status" value="ALT_SEQ"/>
    <property type="molecule type" value="Genomic_DNA"/>
</dbReference>
<dbReference type="EMBL" id="CH471106">
    <property type="protein sequence ID" value="EAW84737.1"/>
    <property type="molecule type" value="Genomic_DNA"/>
</dbReference>
<dbReference type="EMBL" id="BC110847">
    <property type="protein sequence ID" value="AAI10848.1"/>
    <property type="molecule type" value="mRNA"/>
</dbReference>
<dbReference type="EMBL" id="BC125092">
    <property type="protein sequence ID" value="AAI25093.1"/>
    <property type="molecule type" value="mRNA"/>
</dbReference>
<dbReference type="EMBL" id="S79499">
    <property type="protein sequence ID" value="AAB35269.1"/>
    <property type="molecule type" value="Genomic_DNA"/>
</dbReference>
<dbReference type="EMBL" id="S79500">
    <property type="protein sequence ID" value="AAB35270.1"/>
    <property type="molecule type" value="Genomic_DNA"/>
</dbReference>
<dbReference type="CCDS" id="CCDS12385.1">
    <molecule id="P49747-1"/>
</dbReference>
<dbReference type="RefSeq" id="NP_000086.2">
    <molecule id="P49747-1"/>
    <property type="nucleotide sequence ID" value="NM_000095.2"/>
</dbReference>
<dbReference type="PDB" id="3FBY">
    <property type="method" value="X-ray"/>
    <property type="resolution" value="3.15 A"/>
    <property type="chains" value="A/B/C=225-757"/>
</dbReference>
<dbReference type="PDBsum" id="3FBY"/>
<dbReference type="SMR" id="P49747"/>
<dbReference type="BioGRID" id="107706">
    <property type="interactions" value="14"/>
</dbReference>
<dbReference type="ComplexPortal" id="CPX-1791">
    <property type="entry name" value="Thrombospondin 5 complex"/>
</dbReference>
<dbReference type="FunCoup" id="P49747">
    <property type="interactions" value="662"/>
</dbReference>
<dbReference type="IntAct" id="P49747">
    <property type="interactions" value="21"/>
</dbReference>
<dbReference type="STRING" id="9606.ENSP00000222271"/>
<dbReference type="DrugBank" id="DB01373">
    <property type="generic name" value="Calcium"/>
</dbReference>
<dbReference type="GlyConnect" id="1076">
    <property type="glycosylation" value="7 N-Linked glycans (2 sites)"/>
</dbReference>
<dbReference type="GlyCosmos" id="P49747">
    <property type="glycosylation" value="2 sites, 8 glycans"/>
</dbReference>
<dbReference type="GlyGen" id="P49747">
    <property type="glycosylation" value="3 sites, 18 N-linked glycans (2 sites), 1 O-linked glycan (1 site)"/>
</dbReference>
<dbReference type="iPTMnet" id="P49747"/>
<dbReference type="PhosphoSitePlus" id="P49747"/>
<dbReference type="BioMuta" id="COMP"/>
<dbReference type="DMDM" id="209572601"/>
<dbReference type="jPOST" id="P49747"/>
<dbReference type="MassIVE" id="P49747"/>
<dbReference type="PaxDb" id="9606-ENSP00000222271"/>
<dbReference type="PeptideAtlas" id="P49747"/>
<dbReference type="ProteomicsDB" id="4464"/>
<dbReference type="ProteomicsDB" id="56060">
    <molecule id="P49747-1"/>
</dbReference>
<dbReference type="Antibodypedia" id="15160">
    <property type="antibodies" value="392 antibodies from 30 providers"/>
</dbReference>
<dbReference type="DNASU" id="1311"/>
<dbReference type="Ensembl" id="ENST00000222271.7">
    <molecule id="P49747-1"/>
    <property type="protein sequence ID" value="ENSP00000222271.2"/>
    <property type="gene ID" value="ENSG00000105664.11"/>
</dbReference>
<dbReference type="Ensembl" id="ENST00000425807.1">
    <molecule id="P49747-2"/>
    <property type="protein sequence ID" value="ENSP00000403792.1"/>
    <property type="gene ID" value="ENSG00000105664.11"/>
</dbReference>
<dbReference type="GeneID" id="1311"/>
<dbReference type="KEGG" id="hsa:1311"/>
<dbReference type="MANE-Select" id="ENST00000222271.7">
    <property type="protein sequence ID" value="ENSP00000222271.2"/>
    <property type="RefSeq nucleotide sequence ID" value="NM_000095.3"/>
    <property type="RefSeq protein sequence ID" value="NP_000086.2"/>
</dbReference>
<dbReference type="UCSC" id="uc002nke.4">
    <molecule id="P49747-1"/>
    <property type="organism name" value="human"/>
</dbReference>
<dbReference type="AGR" id="HGNC:2227"/>
<dbReference type="CTD" id="1311"/>
<dbReference type="DisGeNET" id="1311"/>
<dbReference type="GeneCards" id="COMP"/>
<dbReference type="GeneReviews" id="COMP"/>
<dbReference type="HGNC" id="HGNC:2227">
    <property type="gene designation" value="COMP"/>
</dbReference>
<dbReference type="HPA" id="ENSG00000105664">
    <property type="expression patterns" value="Tissue enhanced (adipose tissue, heart muscle, skin)"/>
</dbReference>
<dbReference type="MalaCards" id="COMP"/>
<dbReference type="MIM" id="132400">
    <property type="type" value="phenotype"/>
</dbReference>
<dbReference type="MIM" id="177170">
    <property type="type" value="phenotype"/>
</dbReference>
<dbReference type="MIM" id="600310">
    <property type="type" value="gene"/>
</dbReference>
<dbReference type="MIM" id="619161">
    <property type="type" value="phenotype"/>
</dbReference>
<dbReference type="neXtProt" id="NX_P49747"/>
<dbReference type="OpenTargets" id="ENSG00000105664"/>
<dbReference type="Orphanet" id="93308">
    <property type="disease" value="Multiple epiphyseal dysplasia type 1"/>
</dbReference>
<dbReference type="Orphanet" id="750">
    <property type="disease" value="Pseudoachondroplasia"/>
</dbReference>
<dbReference type="PharmGKB" id="PA26744"/>
<dbReference type="VEuPathDB" id="HostDB:ENSG00000105664"/>
<dbReference type="eggNOG" id="ENOG502QRK8">
    <property type="taxonomic scope" value="Eukaryota"/>
</dbReference>
<dbReference type="GeneTree" id="ENSGT00940000162169"/>
<dbReference type="InParanoid" id="P49747"/>
<dbReference type="OMA" id="DSCPFIS"/>
<dbReference type="OrthoDB" id="14563at2759"/>
<dbReference type="PAN-GO" id="P49747">
    <property type="GO annotations" value="1 GO annotation based on evolutionary models"/>
</dbReference>
<dbReference type="PhylomeDB" id="P49747"/>
<dbReference type="TreeFam" id="TF324917"/>
<dbReference type="PathwayCommons" id="P49747"/>
<dbReference type="Reactome" id="R-HSA-216083">
    <property type="pathway name" value="Integrin cell surface interactions"/>
</dbReference>
<dbReference type="Reactome" id="R-HSA-3000178">
    <property type="pathway name" value="ECM proteoglycans"/>
</dbReference>
<dbReference type="SignaLink" id="P49747"/>
<dbReference type="BioGRID-ORCS" id="1311">
    <property type="hits" value="12 hits in 1142 CRISPR screens"/>
</dbReference>
<dbReference type="ChiTaRS" id="COMP">
    <property type="organism name" value="human"/>
</dbReference>
<dbReference type="EvolutionaryTrace" id="P49747"/>
<dbReference type="GeneWiki" id="Cartilage_oligomeric_matrix_protein"/>
<dbReference type="GenomeRNAi" id="1311"/>
<dbReference type="Pharos" id="P49747">
    <property type="development level" value="Tbio"/>
</dbReference>
<dbReference type="PRO" id="PR:P49747"/>
<dbReference type="Proteomes" id="UP000005640">
    <property type="component" value="Chromosome 19"/>
</dbReference>
<dbReference type="RNAct" id="P49747">
    <property type="molecule type" value="protein"/>
</dbReference>
<dbReference type="Bgee" id="ENSG00000105664">
    <property type="expression patterns" value="Expressed in tibia and 136 other cell types or tissues"/>
</dbReference>
<dbReference type="ExpressionAtlas" id="P49747">
    <property type="expression patterns" value="baseline and differential"/>
</dbReference>
<dbReference type="GO" id="GO:0062023">
    <property type="term" value="C:collagen-containing extracellular matrix"/>
    <property type="evidence" value="ECO:0000318"/>
    <property type="project" value="GO_Central"/>
</dbReference>
<dbReference type="GO" id="GO:0070062">
    <property type="term" value="C:extracellular exosome"/>
    <property type="evidence" value="ECO:0007005"/>
    <property type="project" value="UniProtKB"/>
</dbReference>
<dbReference type="GO" id="GO:0031012">
    <property type="term" value="C:extracellular matrix"/>
    <property type="evidence" value="ECO:0000314"/>
    <property type="project" value="UniProtKB"/>
</dbReference>
<dbReference type="GO" id="GO:0005576">
    <property type="term" value="C:extracellular region"/>
    <property type="evidence" value="ECO:0000314"/>
    <property type="project" value="UniProtKB"/>
</dbReference>
<dbReference type="GO" id="GO:0005615">
    <property type="term" value="C:extracellular space"/>
    <property type="evidence" value="ECO:0007005"/>
    <property type="project" value="BHF-UCL"/>
</dbReference>
<dbReference type="GO" id="GO:0032991">
    <property type="term" value="C:protein-containing complex"/>
    <property type="evidence" value="ECO:0007669"/>
    <property type="project" value="Ensembl"/>
</dbReference>
<dbReference type="GO" id="GO:0036122">
    <property type="term" value="F:BMP binding"/>
    <property type="evidence" value="ECO:0007669"/>
    <property type="project" value="Ensembl"/>
</dbReference>
<dbReference type="GO" id="GO:0005509">
    <property type="term" value="F:calcium ion binding"/>
    <property type="evidence" value="ECO:0000314"/>
    <property type="project" value="UniProtKB"/>
</dbReference>
<dbReference type="GO" id="GO:0005518">
    <property type="term" value="F:collagen binding"/>
    <property type="evidence" value="ECO:0000314"/>
    <property type="project" value="UniProtKB"/>
</dbReference>
<dbReference type="GO" id="GO:0005201">
    <property type="term" value="F:extracellular matrix structural constituent"/>
    <property type="evidence" value="ECO:0000304"/>
    <property type="project" value="ProtInc"/>
</dbReference>
<dbReference type="GO" id="GO:0043395">
    <property type="term" value="F:heparan sulfate proteoglycan binding"/>
    <property type="evidence" value="ECO:0000314"/>
    <property type="project" value="UniProtKB"/>
</dbReference>
<dbReference type="GO" id="GO:0008201">
    <property type="term" value="F:heparin binding"/>
    <property type="evidence" value="ECO:0000314"/>
    <property type="project" value="UniProtKB"/>
</dbReference>
<dbReference type="GO" id="GO:0005178">
    <property type="term" value="F:integrin binding"/>
    <property type="evidence" value="ECO:0007669"/>
    <property type="project" value="Ensembl"/>
</dbReference>
<dbReference type="GO" id="GO:0002020">
    <property type="term" value="F:protease binding"/>
    <property type="evidence" value="ECO:0000353"/>
    <property type="project" value="BHF-UCL"/>
</dbReference>
<dbReference type="GO" id="GO:0043394">
    <property type="term" value="F:proteoglycan binding"/>
    <property type="evidence" value="ECO:0000314"/>
    <property type="project" value="MGI"/>
</dbReference>
<dbReference type="GO" id="GO:0009887">
    <property type="term" value="P:animal organ morphogenesis"/>
    <property type="evidence" value="ECO:0000304"/>
    <property type="project" value="ProtInc"/>
</dbReference>
<dbReference type="GO" id="GO:0006915">
    <property type="term" value="P:apoptotic process"/>
    <property type="evidence" value="ECO:0007669"/>
    <property type="project" value="UniProtKB-KW"/>
</dbReference>
<dbReference type="GO" id="GO:0048844">
    <property type="term" value="P:artery morphogenesis"/>
    <property type="evidence" value="ECO:0007669"/>
    <property type="project" value="Ensembl"/>
</dbReference>
<dbReference type="GO" id="GO:0030509">
    <property type="term" value="P:BMP signaling pathway"/>
    <property type="evidence" value="ECO:0007669"/>
    <property type="project" value="Ensembl"/>
</dbReference>
<dbReference type="GO" id="GO:0030282">
    <property type="term" value="P:bone mineralization"/>
    <property type="evidence" value="ECO:0007669"/>
    <property type="project" value="Ensembl"/>
</dbReference>
<dbReference type="GO" id="GO:1990079">
    <property type="term" value="P:cartilage homeostasis"/>
    <property type="evidence" value="ECO:0000314"/>
    <property type="project" value="UniProtKB"/>
</dbReference>
<dbReference type="GO" id="GO:0090398">
    <property type="term" value="P:cellular senescence"/>
    <property type="evidence" value="ECO:0007669"/>
    <property type="project" value="Ensembl"/>
</dbReference>
<dbReference type="GO" id="GO:0002063">
    <property type="term" value="P:chondrocyte development"/>
    <property type="evidence" value="ECO:0007669"/>
    <property type="project" value="Ensembl"/>
</dbReference>
<dbReference type="GO" id="GO:0035988">
    <property type="term" value="P:chondrocyte proliferation"/>
    <property type="evidence" value="ECO:0007669"/>
    <property type="project" value="Ensembl"/>
</dbReference>
<dbReference type="GO" id="GO:0030199">
    <property type="term" value="P:collagen fibril organization"/>
    <property type="evidence" value="ECO:0007669"/>
    <property type="project" value="Ensembl"/>
</dbReference>
<dbReference type="GO" id="GO:0003417">
    <property type="term" value="P:growth plate cartilage development"/>
    <property type="evidence" value="ECO:0007669"/>
    <property type="project" value="Ensembl"/>
</dbReference>
<dbReference type="GO" id="GO:0060173">
    <property type="term" value="P:limb development"/>
    <property type="evidence" value="ECO:0000314"/>
    <property type="project" value="UniProtKB"/>
</dbReference>
<dbReference type="GO" id="GO:0035264">
    <property type="term" value="P:multicellular organism growth"/>
    <property type="evidence" value="ECO:0007669"/>
    <property type="project" value="Ensembl"/>
</dbReference>
<dbReference type="GO" id="GO:0050881">
    <property type="term" value="P:musculoskeletal movement"/>
    <property type="evidence" value="ECO:0007669"/>
    <property type="project" value="Ensembl"/>
</dbReference>
<dbReference type="GO" id="GO:0043066">
    <property type="term" value="P:negative regulation of apoptotic process"/>
    <property type="evidence" value="ECO:0000314"/>
    <property type="project" value="UniProtKB"/>
</dbReference>
<dbReference type="GO" id="GO:1900047">
    <property type="term" value="P:negative regulation of hemostasis"/>
    <property type="evidence" value="ECO:0007669"/>
    <property type="project" value="Ensembl"/>
</dbReference>
<dbReference type="GO" id="GO:0070527">
    <property type="term" value="P:platelet aggregation"/>
    <property type="evidence" value="ECO:0007669"/>
    <property type="project" value="Ensembl"/>
</dbReference>
<dbReference type="GO" id="GO:1902732">
    <property type="term" value="P:positive regulation of chondrocyte proliferation"/>
    <property type="evidence" value="ECO:0007669"/>
    <property type="project" value="Ensembl"/>
</dbReference>
<dbReference type="GO" id="GO:0051260">
    <property type="term" value="P:protein homooligomerization"/>
    <property type="evidence" value="ECO:0000314"/>
    <property type="project" value="UniProtKB"/>
</dbReference>
<dbReference type="GO" id="GO:0016485">
    <property type="term" value="P:protein processing"/>
    <property type="evidence" value="ECO:0007669"/>
    <property type="project" value="Ensembl"/>
</dbReference>
<dbReference type="GO" id="GO:0009306">
    <property type="term" value="P:protein secretion"/>
    <property type="evidence" value="ECO:0007669"/>
    <property type="project" value="Ensembl"/>
</dbReference>
<dbReference type="GO" id="GO:0030500">
    <property type="term" value="P:regulation of bone mineralization"/>
    <property type="evidence" value="ECO:0007669"/>
    <property type="project" value="Ensembl"/>
</dbReference>
<dbReference type="GO" id="GO:0010468">
    <property type="term" value="P:regulation of gene expression"/>
    <property type="evidence" value="ECO:0007669"/>
    <property type="project" value="Ensembl"/>
</dbReference>
<dbReference type="GO" id="GO:0006986">
    <property type="term" value="P:response to unfolded protein"/>
    <property type="evidence" value="ECO:0007669"/>
    <property type="project" value="Ensembl"/>
</dbReference>
<dbReference type="GO" id="GO:0001501">
    <property type="term" value="P:skeletal system development"/>
    <property type="evidence" value="ECO:0000304"/>
    <property type="project" value="ProtInc"/>
</dbReference>
<dbReference type="GO" id="GO:0043588">
    <property type="term" value="P:skin development"/>
    <property type="evidence" value="ECO:0007669"/>
    <property type="project" value="Ensembl"/>
</dbReference>
<dbReference type="GO" id="GO:0035989">
    <property type="term" value="P:tendon development"/>
    <property type="evidence" value="ECO:0007669"/>
    <property type="project" value="Ensembl"/>
</dbReference>
<dbReference type="GO" id="GO:0097084">
    <property type="term" value="P:vascular associated smooth muscle cell development"/>
    <property type="evidence" value="ECO:0007669"/>
    <property type="project" value="Ensembl"/>
</dbReference>
<dbReference type="GO" id="GO:0014829">
    <property type="term" value="P:vascular associated smooth muscle contraction"/>
    <property type="evidence" value="ECO:0007669"/>
    <property type="project" value="Ensembl"/>
</dbReference>
<dbReference type="CDD" id="cd00054">
    <property type="entry name" value="EGF_CA"/>
    <property type="match status" value="2"/>
</dbReference>
<dbReference type="CDD" id="cd16077">
    <property type="entry name" value="TSP-5cc"/>
    <property type="match status" value="1"/>
</dbReference>
<dbReference type="FunFam" id="2.10.25.10:FF:000346">
    <property type="entry name" value="Cartilage oligomeric matrix protein"/>
    <property type="match status" value="1"/>
</dbReference>
<dbReference type="FunFam" id="4.10.1080.10:FF:000004">
    <property type="entry name" value="Cartilage oligomeric matrix protein"/>
    <property type="match status" value="1"/>
</dbReference>
<dbReference type="FunFam" id="2.10.25.10:FF:000025">
    <property type="entry name" value="Thrombospondin 3"/>
    <property type="match status" value="1"/>
</dbReference>
<dbReference type="FunFam" id="2.10.25.10:FF:000027">
    <property type="entry name" value="Thrombospondin 3"/>
    <property type="match status" value="1"/>
</dbReference>
<dbReference type="FunFam" id="2.60.120.200:FF:000002">
    <property type="entry name" value="Thrombospondin 3"/>
    <property type="match status" value="1"/>
</dbReference>
<dbReference type="FunFam" id="4.10.1080.10:FF:000001">
    <property type="entry name" value="Thrombospondin 3"/>
    <property type="match status" value="1"/>
</dbReference>
<dbReference type="FunFam" id="2.10.25.10:FF:000170">
    <property type="entry name" value="thrombospondin-3 isoform X1"/>
    <property type="match status" value="1"/>
</dbReference>
<dbReference type="FunFam" id="1.20.5.10:FF:000001">
    <property type="entry name" value="thrombospondin-3 isoform X2"/>
    <property type="match status" value="1"/>
</dbReference>
<dbReference type="Gene3D" id="1.20.5.10">
    <property type="match status" value="1"/>
</dbReference>
<dbReference type="Gene3D" id="2.60.120.200">
    <property type="match status" value="1"/>
</dbReference>
<dbReference type="Gene3D" id="2.10.25.10">
    <property type="entry name" value="Laminin"/>
    <property type="match status" value="4"/>
</dbReference>
<dbReference type="Gene3D" id="4.10.1080.10">
    <property type="entry name" value="TSP type-3 repeat"/>
    <property type="match status" value="2"/>
</dbReference>
<dbReference type="InterPro" id="IPR013320">
    <property type="entry name" value="ConA-like_dom_sf"/>
</dbReference>
<dbReference type="InterPro" id="IPR001881">
    <property type="entry name" value="EGF-like_Ca-bd_dom"/>
</dbReference>
<dbReference type="InterPro" id="IPR000742">
    <property type="entry name" value="EGF-like_dom"/>
</dbReference>
<dbReference type="InterPro" id="IPR018097">
    <property type="entry name" value="EGF_Ca-bd_CS"/>
</dbReference>
<dbReference type="InterPro" id="IPR009030">
    <property type="entry name" value="Growth_fac_rcpt_cys_sf"/>
</dbReference>
<dbReference type="InterPro" id="IPR049883">
    <property type="entry name" value="NOTCH1_EGF-like"/>
</dbReference>
<dbReference type="InterPro" id="IPR003367">
    <property type="entry name" value="Thrombospondin_3-like_rpt"/>
</dbReference>
<dbReference type="InterPro" id="IPR017897">
    <property type="entry name" value="Thrombospondin_3_rpt"/>
</dbReference>
<dbReference type="InterPro" id="IPR008859">
    <property type="entry name" value="Thrombospondin_C"/>
</dbReference>
<dbReference type="InterPro" id="IPR039081">
    <property type="entry name" value="TSP-5_cc"/>
</dbReference>
<dbReference type="InterPro" id="IPR024665">
    <property type="entry name" value="TSP/COMP_coiled-coil"/>
</dbReference>
<dbReference type="InterPro" id="IPR046970">
    <property type="entry name" value="TSP/COMP_coiled-coil_sf"/>
</dbReference>
<dbReference type="InterPro" id="IPR028974">
    <property type="entry name" value="TSP_type-3_rpt"/>
</dbReference>
<dbReference type="PANTHER" id="PTHR10199:SF88">
    <property type="entry name" value="CARTILAGE OLIGOMERIC MATRIX PROTEIN"/>
    <property type="match status" value="1"/>
</dbReference>
<dbReference type="PANTHER" id="PTHR10199">
    <property type="entry name" value="THROMBOSPONDIN"/>
    <property type="match status" value="1"/>
</dbReference>
<dbReference type="Pfam" id="PF11598">
    <property type="entry name" value="COMP"/>
    <property type="match status" value="1"/>
</dbReference>
<dbReference type="Pfam" id="PF07645">
    <property type="entry name" value="EGF_CA"/>
    <property type="match status" value="2"/>
</dbReference>
<dbReference type="Pfam" id="PF02412">
    <property type="entry name" value="TSP_3"/>
    <property type="match status" value="5"/>
</dbReference>
<dbReference type="Pfam" id="PF05735">
    <property type="entry name" value="TSP_C"/>
    <property type="match status" value="1"/>
</dbReference>
<dbReference type="SMART" id="SM00181">
    <property type="entry name" value="EGF"/>
    <property type="match status" value="4"/>
</dbReference>
<dbReference type="SMART" id="SM00179">
    <property type="entry name" value="EGF_CA"/>
    <property type="match status" value="3"/>
</dbReference>
<dbReference type="SUPFAM" id="SSF58006">
    <property type="entry name" value="Assembly domain of cartilage oligomeric matrix protein"/>
    <property type="match status" value="1"/>
</dbReference>
<dbReference type="SUPFAM" id="SSF49899">
    <property type="entry name" value="Concanavalin A-like lectins/glucanases"/>
    <property type="match status" value="1"/>
</dbReference>
<dbReference type="SUPFAM" id="SSF57196">
    <property type="entry name" value="EGF/Laminin"/>
    <property type="match status" value="1"/>
</dbReference>
<dbReference type="SUPFAM" id="SSF57184">
    <property type="entry name" value="Growth factor receptor domain"/>
    <property type="match status" value="1"/>
</dbReference>
<dbReference type="SUPFAM" id="SSF103647">
    <property type="entry name" value="TSP type-3 repeat"/>
    <property type="match status" value="3"/>
</dbReference>
<dbReference type="PROSITE" id="PS01186">
    <property type="entry name" value="EGF_2"/>
    <property type="match status" value="1"/>
</dbReference>
<dbReference type="PROSITE" id="PS50026">
    <property type="entry name" value="EGF_3"/>
    <property type="match status" value="3"/>
</dbReference>
<dbReference type="PROSITE" id="PS01187">
    <property type="entry name" value="EGF_CA"/>
    <property type="match status" value="2"/>
</dbReference>
<dbReference type="PROSITE" id="PS51234">
    <property type="entry name" value="TSP3"/>
    <property type="match status" value="8"/>
</dbReference>
<dbReference type="PROSITE" id="PS51236">
    <property type="entry name" value="TSP_CTER"/>
    <property type="match status" value="1"/>
</dbReference>
<evidence type="ECO:0000250" key="1">
    <source>
        <dbReference type="UniProtKB" id="P35444"/>
    </source>
</evidence>
<evidence type="ECO:0000255" key="2"/>
<evidence type="ECO:0000255" key="3">
    <source>
        <dbReference type="PROSITE-ProRule" id="PRU00076"/>
    </source>
</evidence>
<evidence type="ECO:0000255" key="4">
    <source>
        <dbReference type="PROSITE-ProRule" id="PRU00635"/>
    </source>
</evidence>
<evidence type="ECO:0000256" key="5">
    <source>
        <dbReference type="SAM" id="MobiDB-lite"/>
    </source>
</evidence>
<evidence type="ECO:0000269" key="6">
    <source>
    </source>
</evidence>
<evidence type="ECO:0000269" key="7">
    <source>
    </source>
</evidence>
<evidence type="ECO:0000269" key="8">
    <source>
    </source>
</evidence>
<evidence type="ECO:0000269" key="9">
    <source>
    </source>
</evidence>
<evidence type="ECO:0000269" key="10">
    <source>
    </source>
</evidence>
<evidence type="ECO:0000269" key="11">
    <source>
    </source>
</evidence>
<evidence type="ECO:0000269" key="12">
    <source>
    </source>
</evidence>
<evidence type="ECO:0000269" key="13">
    <source>
    </source>
</evidence>
<evidence type="ECO:0000269" key="14">
    <source>
    </source>
</evidence>
<evidence type="ECO:0000269" key="15">
    <source>
    </source>
</evidence>
<evidence type="ECO:0000269" key="16">
    <source>
    </source>
</evidence>
<evidence type="ECO:0000269" key="17">
    <source>
    </source>
</evidence>
<evidence type="ECO:0000269" key="18">
    <source>
    </source>
</evidence>
<evidence type="ECO:0000269" key="19">
    <source>
    </source>
</evidence>
<evidence type="ECO:0000269" key="20">
    <source>
    </source>
</evidence>
<evidence type="ECO:0000269" key="21">
    <source>
    </source>
</evidence>
<evidence type="ECO:0000269" key="22">
    <source>
    </source>
</evidence>
<evidence type="ECO:0000269" key="23">
    <source>
    </source>
</evidence>
<evidence type="ECO:0000269" key="24">
    <source>
    </source>
</evidence>
<evidence type="ECO:0000269" key="25">
    <source>
    </source>
</evidence>
<evidence type="ECO:0000269" key="26">
    <source>
    </source>
</evidence>
<evidence type="ECO:0000269" key="27">
    <source>
    </source>
</evidence>
<evidence type="ECO:0000269" key="28">
    <source>
    </source>
</evidence>
<evidence type="ECO:0000269" key="29">
    <source>
    </source>
</evidence>
<evidence type="ECO:0000269" key="30">
    <source>
    </source>
</evidence>
<evidence type="ECO:0000269" key="31">
    <source ref="2"/>
</evidence>
<evidence type="ECO:0000303" key="32">
    <source>
    </source>
</evidence>
<evidence type="ECO:0000305" key="33"/>
<evidence type="ECO:0000305" key="34">
    <source>
    </source>
</evidence>
<evidence type="ECO:0000312" key="35">
    <source>
        <dbReference type="HGNC" id="HGNC:2227"/>
    </source>
</evidence>
<evidence type="ECO:0007829" key="36">
    <source>
        <dbReference type="PDB" id="3FBY"/>
    </source>
</evidence>
<keyword id="KW-0002">3D-structure</keyword>
<keyword id="KW-0025">Alternative splicing</keyword>
<keyword id="KW-0053">Apoptosis</keyword>
<keyword id="KW-0106">Calcium</keyword>
<keyword id="KW-0130">Cell adhesion</keyword>
<keyword id="KW-0903">Direct protein sequencing</keyword>
<keyword id="KW-0225">Disease variant</keyword>
<keyword id="KW-1015">Disulfide bond</keyword>
<keyword id="KW-0242">Dwarfism</keyword>
<keyword id="KW-0245">EGF-like domain</keyword>
<keyword id="KW-0272">Extracellular matrix</keyword>
<keyword id="KW-0325">Glycoprotein</keyword>
<keyword id="KW-0358">Heparin-binding</keyword>
<keyword id="KW-1267">Proteomics identification</keyword>
<keyword id="KW-1185">Reference proteome</keyword>
<keyword id="KW-0677">Repeat</keyword>
<keyword id="KW-0964">Secreted</keyword>
<keyword id="KW-0732">Signal</keyword>
<organism>
    <name type="scientific">Homo sapiens</name>
    <name type="common">Human</name>
    <dbReference type="NCBI Taxonomy" id="9606"/>
    <lineage>
        <taxon>Eukaryota</taxon>
        <taxon>Metazoa</taxon>
        <taxon>Chordata</taxon>
        <taxon>Craniata</taxon>
        <taxon>Vertebrata</taxon>
        <taxon>Euteleostomi</taxon>
        <taxon>Mammalia</taxon>
        <taxon>Eutheria</taxon>
        <taxon>Euarchontoglires</taxon>
        <taxon>Primates</taxon>
        <taxon>Haplorrhini</taxon>
        <taxon>Catarrhini</taxon>
        <taxon>Hominidae</taxon>
        <taxon>Homo</taxon>
    </lineage>
</organism>
<accession>P49747</accession>
<accession>B4DKJ3</accession>
<accession>O14592</accession>
<accession>Q16388</accession>
<accession>Q16389</accession>
<accession>Q2NL86</accession>
<accession>Q8N4T2</accession>
<protein>
    <recommendedName>
        <fullName evidence="33">Cartilage oligomeric matrix protein</fullName>
        <shortName>COMP</shortName>
    </recommendedName>
    <alternativeName>
        <fullName>Thrombospondin-5</fullName>
        <shortName>TSP5</shortName>
    </alternativeName>
</protein>
<proteinExistence type="evidence at protein level"/>